<organism>
    <name type="scientific">Thermus thermophilus (strain ATCC 27634 / DSM 579 / HB8)</name>
    <dbReference type="NCBI Taxonomy" id="300852"/>
    <lineage>
        <taxon>Bacteria</taxon>
        <taxon>Thermotogati</taxon>
        <taxon>Deinococcota</taxon>
        <taxon>Deinococci</taxon>
        <taxon>Thermales</taxon>
        <taxon>Thermaceae</taxon>
        <taxon>Thermus</taxon>
    </lineage>
</organism>
<dbReference type="EMBL" id="X52165">
    <property type="protein sequence ID" value="CAA36418.1"/>
    <property type="status" value="ALT_INIT"/>
    <property type="molecule type" value="Genomic_DNA"/>
</dbReference>
<dbReference type="EMBL" id="AP008226">
    <property type="protein sequence ID" value="BAD71520.1"/>
    <property type="status" value="ALT_INIT"/>
    <property type="molecule type" value="Genomic_DNA"/>
</dbReference>
<dbReference type="PIR" id="S10249">
    <property type="entry name" value="R3TW12"/>
</dbReference>
<dbReference type="RefSeq" id="YP_144963.1">
    <property type="nucleotide sequence ID" value="NC_006461.1"/>
</dbReference>
<dbReference type="PDB" id="1FJG">
    <property type="method" value="X-ray"/>
    <property type="resolution" value="3.00 A"/>
    <property type="chains" value="L=2-132"/>
</dbReference>
<dbReference type="PDB" id="1HNW">
    <property type="method" value="X-ray"/>
    <property type="resolution" value="3.40 A"/>
    <property type="chains" value="L=2-132"/>
</dbReference>
<dbReference type="PDB" id="1HNX">
    <property type="method" value="X-ray"/>
    <property type="resolution" value="3.40 A"/>
    <property type="chains" value="L=2-132"/>
</dbReference>
<dbReference type="PDB" id="1HNZ">
    <property type="method" value="X-ray"/>
    <property type="resolution" value="3.30 A"/>
    <property type="chains" value="L=2-132"/>
</dbReference>
<dbReference type="PDB" id="1HR0">
    <property type="method" value="X-ray"/>
    <property type="resolution" value="3.20 A"/>
    <property type="chains" value="L=2-132"/>
</dbReference>
<dbReference type="PDB" id="1I94">
    <property type="method" value="X-ray"/>
    <property type="resolution" value="3.20 A"/>
    <property type="chains" value="L=2-132"/>
</dbReference>
<dbReference type="PDB" id="1I95">
    <property type="method" value="X-ray"/>
    <property type="resolution" value="4.50 A"/>
    <property type="chains" value="L=2-132"/>
</dbReference>
<dbReference type="PDB" id="1I96">
    <property type="method" value="X-ray"/>
    <property type="resolution" value="4.20 A"/>
    <property type="chains" value="L=2-132"/>
</dbReference>
<dbReference type="PDB" id="1I97">
    <property type="method" value="X-ray"/>
    <property type="resolution" value="4.50 A"/>
    <property type="chains" value="L=2-132"/>
</dbReference>
<dbReference type="PDB" id="1IBK">
    <property type="method" value="X-ray"/>
    <property type="resolution" value="3.31 A"/>
    <property type="chains" value="L=2-132"/>
</dbReference>
<dbReference type="PDB" id="1IBL">
    <property type="method" value="X-ray"/>
    <property type="resolution" value="3.11 A"/>
    <property type="chains" value="L=2-132"/>
</dbReference>
<dbReference type="PDB" id="1IBM">
    <property type="method" value="X-ray"/>
    <property type="resolution" value="3.31 A"/>
    <property type="chains" value="L=2-132"/>
</dbReference>
<dbReference type="PDB" id="1J5E">
    <property type="method" value="X-ray"/>
    <property type="resolution" value="3.05 A"/>
    <property type="chains" value="L=2-132"/>
</dbReference>
<dbReference type="PDB" id="1JGO">
    <property type="method" value="X-ray"/>
    <property type="resolution" value="5.60 A"/>
    <property type="chains" value="O=2-132"/>
</dbReference>
<dbReference type="PDB" id="1JGP">
    <property type="method" value="X-ray"/>
    <property type="resolution" value="7.00 A"/>
    <property type="chains" value="O=2-132"/>
</dbReference>
<dbReference type="PDB" id="1JGQ">
    <property type="method" value="X-ray"/>
    <property type="resolution" value="5.00 A"/>
    <property type="chains" value="O=2-132"/>
</dbReference>
<dbReference type="PDB" id="1ML5">
    <property type="method" value="EM"/>
    <property type="resolution" value="14.00 A"/>
    <property type="chains" value="O=2-132"/>
</dbReference>
<dbReference type="PDB" id="1MVR">
    <property type="method" value="EM"/>
    <property type="resolution" value="12.80 A"/>
    <property type="chains" value="O=2-132"/>
</dbReference>
<dbReference type="PDB" id="1N32">
    <property type="method" value="X-ray"/>
    <property type="resolution" value="3.00 A"/>
    <property type="chains" value="L=2-132"/>
</dbReference>
<dbReference type="PDB" id="1N33">
    <property type="method" value="X-ray"/>
    <property type="resolution" value="3.35 A"/>
    <property type="chains" value="L=2-132"/>
</dbReference>
<dbReference type="PDB" id="1N34">
    <property type="method" value="X-ray"/>
    <property type="resolution" value="3.80 A"/>
    <property type="chains" value="L=2-132"/>
</dbReference>
<dbReference type="PDB" id="1N36">
    <property type="method" value="X-ray"/>
    <property type="resolution" value="3.65 A"/>
    <property type="chains" value="L=2-132"/>
</dbReference>
<dbReference type="PDB" id="1PN7">
    <property type="method" value="EM"/>
    <property type="resolution" value="10.80 A"/>
    <property type="chains" value="O=2-125"/>
</dbReference>
<dbReference type="PDB" id="1PN8">
    <property type="method" value="EM"/>
    <property type="resolution" value="10.80 A"/>
    <property type="chains" value="O=2-125"/>
</dbReference>
<dbReference type="PDB" id="1QZC">
    <property type="method" value="EM"/>
    <property type="resolution" value="9.00 A"/>
    <property type="chains" value="L=2-132"/>
</dbReference>
<dbReference type="PDB" id="1VVJ">
    <property type="method" value="X-ray"/>
    <property type="resolution" value="3.44 A"/>
    <property type="chains" value="QL/XL=1-132"/>
</dbReference>
<dbReference type="PDB" id="1VY4">
    <property type="method" value="X-ray"/>
    <property type="resolution" value="2.60 A"/>
    <property type="chains" value="AL/CL=1-132"/>
</dbReference>
<dbReference type="PDB" id="1VY5">
    <property type="method" value="X-ray"/>
    <property type="resolution" value="2.55 A"/>
    <property type="chains" value="AL/CL=1-132"/>
</dbReference>
<dbReference type="PDB" id="1VY6">
    <property type="method" value="X-ray"/>
    <property type="resolution" value="2.90 A"/>
    <property type="chains" value="AL/CL=1-132"/>
</dbReference>
<dbReference type="PDB" id="1VY7">
    <property type="method" value="X-ray"/>
    <property type="resolution" value="2.80 A"/>
    <property type="chains" value="AL/CL=1-132"/>
</dbReference>
<dbReference type="PDB" id="1XMO">
    <property type="method" value="X-ray"/>
    <property type="resolution" value="3.25 A"/>
    <property type="chains" value="L=2-132"/>
</dbReference>
<dbReference type="PDB" id="1XMQ">
    <property type="method" value="X-ray"/>
    <property type="resolution" value="3.00 A"/>
    <property type="chains" value="L=2-132"/>
</dbReference>
<dbReference type="PDB" id="1XNQ">
    <property type="method" value="X-ray"/>
    <property type="resolution" value="3.05 A"/>
    <property type="chains" value="L=2-132"/>
</dbReference>
<dbReference type="PDB" id="1XNR">
    <property type="method" value="X-ray"/>
    <property type="resolution" value="3.10 A"/>
    <property type="chains" value="L=2-132"/>
</dbReference>
<dbReference type="PDB" id="2E5L">
    <property type="method" value="X-ray"/>
    <property type="resolution" value="3.30 A"/>
    <property type="chains" value="L=2-132"/>
</dbReference>
<dbReference type="PDB" id="2F4V">
    <property type="method" value="X-ray"/>
    <property type="resolution" value="3.80 A"/>
    <property type="chains" value="L=1-132"/>
</dbReference>
<dbReference type="PDB" id="2HHH">
    <property type="method" value="X-ray"/>
    <property type="resolution" value="3.35 A"/>
    <property type="chains" value="L=2-132"/>
</dbReference>
<dbReference type="PDB" id="2UU9">
    <property type="method" value="X-ray"/>
    <property type="resolution" value="3.10 A"/>
    <property type="chains" value="L=2-132"/>
</dbReference>
<dbReference type="PDB" id="2UUA">
    <property type="method" value="X-ray"/>
    <property type="resolution" value="2.90 A"/>
    <property type="chains" value="L=2-132"/>
</dbReference>
<dbReference type="PDB" id="2UUB">
    <property type="method" value="X-ray"/>
    <property type="resolution" value="2.80 A"/>
    <property type="chains" value="L=2-132"/>
</dbReference>
<dbReference type="PDB" id="2UUC">
    <property type="method" value="X-ray"/>
    <property type="resolution" value="3.10 A"/>
    <property type="chains" value="L=2-132"/>
</dbReference>
<dbReference type="PDB" id="2UXB">
    <property type="method" value="X-ray"/>
    <property type="resolution" value="3.10 A"/>
    <property type="chains" value="L=2-132"/>
</dbReference>
<dbReference type="PDB" id="2UXC">
    <property type="method" value="X-ray"/>
    <property type="resolution" value="2.90 A"/>
    <property type="chains" value="L=2-132"/>
</dbReference>
<dbReference type="PDB" id="2UXD">
    <property type="method" value="X-ray"/>
    <property type="resolution" value="3.20 A"/>
    <property type="chains" value="L=2-132"/>
</dbReference>
<dbReference type="PDB" id="2VQE">
    <property type="method" value="X-ray"/>
    <property type="resolution" value="2.50 A"/>
    <property type="chains" value="L=2-132"/>
</dbReference>
<dbReference type="PDB" id="2VQF">
    <property type="method" value="X-ray"/>
    <property type="resolution" value="2.90 A"/>
    <property type="chains" value="L=2-132"/>
</dbReference>
<dbReference type="PDB" id="2ZM6">
    <property type="method" value="X-ray"/>
    <property type="resolution" value="3.30 A"/>
    <property type="chains" value="L=2-132"/>
</dbReference>
<dbReference type="PDB" id="3OTO">
    <property type="method" value="X-ray"/>
    <property type="resolution" value="3.69 A"/>
    <property type="chains" value="L=2-132"/>
</dbReference>
<dbReference type="PDB" id="3T1H">
    <property type="method" value="X-ray"/>
    <property type="resolution" value="3.11 A"/>
    <property type="chains" value="L=1-132"/>
</dbReference>
<dbReference type="PDB" id="3T1Y">
    <property type="method" value="X-ray"/>
    <property type="resolution" value="2.80 A"/>
    <property type="chains" value="L=1-132"/>
</dbReference>
<dbReference type="PDB" id="4AQY">
    <property type="method" value="X-ray"/>
    <property type="resolution" value="3.50 A"/>
    <property type="chains" value="L=2-132"/>
</dbReference>
<dbReference type="PDB" id="4B3M">
    <property type="method" value="X-ray"/>
    <property type="resolution" value="2.90 A"/>
    <property type="chains" value="L=1-132"/>
</dbReference>
<dbReference type="PDB" id="4B3R">
    <property type="method" value="X-ray"/>
    <property type="resolution" value="3.00 A"/>
    <property type="chains" value="L=1-132"/>
</dbReference>
<dbReference type="PDB" id="4B3S">
    <property type="method" value="X-ray"/>
    <property type="resolution" value="3.15 A"/>
    <property type="chains" value="L=1-132"/>
</dbReference>
<dbReference type="PDB" id="4B3T">
    <property type="method" value="X-ray"/>
    <property type="resolution" value="3.00 A"/>
    <property type="chains" value="L=1-132"/>
</dbReference>
<dbReference type="PDB" id="4DR1">
    <property type="method" value="X-ray"/>
    <property type="resolution" value="3.60 A"/>
    <property type="chains" value="L=1-132"/>
</dbReference>
<dbReference type="PDB" id="4DR2">
    <property type="method" value="X-ray"/>
    <property type="resolution" value="3.25 A"/>
    <property type="chains" value="L=1-132"/>
</dbReference>
<dbReference type="PDB" id="4DR3">
    <property type="method" value="X-ray"/>
    <property type="resolution" value="3.35 A"/>
    <property type="chains" value="L=1-132"/>
</dbReference>
<dbReference type="PDB" id="4DR4">
    <property type="method" value="X-ray"/>
    <property type="resolution" value="3.97 A"/>
    <property type="chains" value="L=1-132"/>
</dbReference>
<dbReference type="PDB" id="4DR5">
    <property type="method" value="X-ray"/>
    <property type="resolution" value="3.45 A"/>
    <property type="chains" value="L=1-132"/>
</dbReference>
<dbReference type="PDB" id="4DR6">
    <property type="method" value="X-ray"/>
    <property type="resolution" value="3.30 A"/>
    <property type="chains" value="L=1-132"/>
</dbReference>
<dbReference type="PDB" id="4DR7">
    <property type="method" value="X-ray"/>
    <property type="resolution" value="3.75 A"/>
    <property type="chains" value="L=1-132"/>
</dbReference>
<dbReference type="PDB" id="4DUY">
    <property type="method" value="X-ray"/>
    <property type="resolution" value="3.39 A"/>
    <property type="chains" value="L=2-132"/>
</dbReference>
<dbReference type="PDB" id="4DUZ">
    <property type="method" value="X-ray"/>
    <property type="resolution" value="3.65 A"/>
    <property type="chains" value="L=2-132"/>
</dbReference>
<dbReference type="PDB" id="4DV0">
    <property type="method" value="X-ray"/>
    <property type="resolution" value="3.85 A"/>
    <property type="chains" value="L=2-132"/>
</dbReference>
<dbReference type="PDB" id="4DV1">
    <property type="method" value="X-ray"/>
    <property type="resolution" value="3.85 A"/>
    <property type="chains" value="L=2-132"/>
</dbReference>
<dbReference type="PDB" id="4DV2">
    <property type="method" value="X-ray"/>
    <property type="resolution" value="3.65 A"/>
    <property type="chains" value="L=2-132"/>
</dbReference>
<dbReference type="PDB" id="4DV3">
    <property type="method" value="X-ray"/>
    <property type="resolution" value="3.55 A"/>
    <property type="chains" value="L=2-132"/>
</dbReference>
<dbReference type="PDB" id="4DV4">
    <property type="method" value="X-ray"/>
    <property type="resolution" value="3.65 A"/>
    <property type="chains" value="L=2-132"/>
</dbReference>
<dbReference type="PDB" id="4DV5">
    <property type="method" value="X-ray"/>
    <property type="resolution" value="3.68 A"/>
    <property type="chains" value="L=2-132"/>
</dbReference>
<dbReference type="PDB" id="4DV6">
    <property type="method" value="X-ray"/>
    <property type="resolution" value="3.30 A"/>
    <property type="chains" value="L=2-132"/>
</dbReference>
<dbReference type="PDB" id="4DV7">
    <property type="method" value="X-ray"/>
    <property type="resolution" value="3.29 A"/>
    <property type="chains" value="L=2-132"/>
</dbReference>
<dbReference type="PDB" id="4GKJ">
    <property type="method" value="X-ray"/>
    <property type="resolution" value="3.30 A"/>
    <property type="chains" value="L=2-125"/>
</dbReference>
<dbReference type="PDB" id="4GKK">
    <property type="method" value="X-ray"/>
    <property type="resolution" value="3.20 A"/>
    <property type="chains" value="L=2-125"/>
</dbReference>
<dbReference type="PDB" id="4JI0">
    <property type="method" value="X-ray"/>
    <property type="resolution" value="3.49 A"/>
    <property type="chains" value="L=2-132"/>
</dbReference>
<dbReference type="PDB" id="4JI1">
    <property type="method" value="X-ray"/>
    <property type="resolution" value="3.14 A"/>
    <property type="chains" value="L=2-132"/>
</dbReference>
<dbReference type="PDB" id="4JI2">
    <property type="method" value="X-ray"/>
    <property type="resolution" value="3.64 A"/>
    <property type="chains" value="L=2-132"/>
</dbReference>
<dbReference type="PDB" id="4JI3">
    <property type="method" value="X-ray"/>
    <property type="resolution" value="3.35 A"/>
    <property type="chains" value="L=2-132"/>
</dbReference>
<dbReference type="PDB" id="4JI4">
    <property type="method" value="X-ray"/>
    <property type="resolution" value="3.69 A"/>
    <property type="chains" value="L=2-132"/>
</dbReference>
<dbReference type="PDB" id="4JI5">
    <property type="method" value="X-ray"/>
    <property type="resolution" value="3.85 A"/>
    <property type="chains" value="L=2-132"/>
</dbReference>
<dbReference type="PDB" id="4JI6">
    <property type="method" value="X-ray"/>
    <property type="resolution" value="3.55 A"/>
    <property type="chains" value="L=2-132"/>
</dbReference>
<dbReference type="PDB" id="4JI7">
    <property type="method" value="X-ray"/>
    <property type="resolution" value="3.50 A"/>
    <property type="chains" value="L=2-132"/>
</dbReference>
<dbReference type="PDB" id="4JI8">
    <property type="method" value="X-ray"/>
    <property type="resolution" value="3.74 A"/>
    <property type="chains" value="L=2-132"/>
</dbReference>
<dbReference type="PDB" id="4JV5">
    <property type="method" value="X-ray"/>
    <property type="resolution" value="3.16 A"/>
    <property type="chains" value="L=2-126"/>
</dbReference>
<dbReference type="PDB" id="4JYA">
    <property type="method" value="X-ray"/>
    <property type="resolution" value="3.10 A"/>
    <property type="chains" value="L=2-126"/>
</dbReference>
<dbReference type="PDB" id="4K0K">
    <property type="method" value="X-ray"/>
    <property type="resolution" value="3.40 A"/>
    <property type="chains" value="L=2-127"/>
</dbReference>
<dbReference type="PDB" id="4KHP">
    <property type="method" value="X-ray"/>
    <property type="resolution" value="3.10 A"/>
    <property type="chains" value="L=2-126"/>
</dbReference>
<dbReference type="PDB" id="4L47">
    <property type="method" value="X-ray"/>
    <property type="resolution" value="3.22 A"/>
    <property type="chains" value="QL/XL=1-132"/>
</dbReference>
<dbReference type="PDB" id="4L71">
    <property type="method" value="X-ray"/>
    <property type="resolution" value="3.90 A"/>
    <property type="chains" value="QL/XL=1-132"/>
</dbReference>
<dbReference type="PDB" id="4LEL">
    <property type="method" value="X-ray"/>
    <property type="resolution" value="3.90 A"/>
    <property type="chains" value="QL/XL=1-132"/>
</dbReference>
<dbReference type="PDB" id="4LFZ">
    <property type="method" value="X-ray"/>
    <property type="resolution" value="3.92 A"/>
    <property type="chains" value="QL/XL=1-132"/>
</dbReference>
<dbReference type="PDB" id="4LNT">
    <property type="method" value="X-ray"/>
    <property type="resolution" value="2.94 A"/>
    <property type="chains" value="QL/XL=1-132"/>
</dbReference>
<dbReference type="PDB" id="4LSK">
    <property type="method" value="X-ray"/>
    <property type="resolution" value="3.48 A"/>
    <property type="chains" value="QL/XL=1-132"/>
</dbReference>
<dbReference type="PDB" id="4LT8">
    <property type="method" value="X-ray"/>
    <property type="resolution" value="3.14 A"/>
    <property type="chains" value="QL/XL=1-132"/>
</dbReference>
<dbReference type="PDB" id="4OX9">
    <property type="method" value="X-ray"/>
    <property type="resolution" value="3.80 A"/>
    <property type="chains" value="L=1-131"/>
</dbReference>
<dbReference type="PDB" id="4P6F">
    <property type="method" value="X-ray"/>
    <property type="resolution" value="3.60 A"/>
    <property type="chains" value="QL/XL=1-132"/>
</dbReference>
<dbReference type="PDB" id="4P70">
    <property type="method" value="X-ray"/>
    <property type="resolution" value="3.68 A"/>
    <property type="chains" value="QL/XL=1-132"/>
</dbReference>
<dbReference type="PDB" id="4TUA">
    <property type="method" value="X-ray"/>
    <property type="resolution" value="3.60 A"/>
    <property type="chains" value="QL/XL=1-132"/>
</dbReference>
<dbReference type="PDB" id="4TUB">
    <property type="method" value="X-ray"/>
    <property type="resolution" value="3.60 A"/>
    <property type="chains" value="QL/XL=1-132"/>
</dbReference>
<dbReference type="PDB" id="4TUC">
    <property type="method" value="X-ray"/>
    <property type="resolution" value="3.60 A"/>
    <property type="chains" value="QL/XL=1-132"/>
</dbReference>
<dbReference type="PDB" id="4TUD">
    <property type="method" value="X-ray"/>
    <property type="resolution" value="3.60 A"/>
    <property type="chains" value="QL/XL=1-132"/>
</dbReference>
<dbReference type="PDB" id="4TUE">
    <property type="method" value="X-ray"/>
    <property type="resolution" value="3.50 A"/>
    <property type="chains" value="QL/XL=1-132"/>
</dbReference>
<dbReference type="PDB" id="4V42">
    <property type="method" value="X-ray"/>
    <property type="resolution" value="5.50 A"/>
    <property type="chains" value="AO=2-132"/>
</dbReference>
<dbReference type="PDB" id="4V49">
    <property type="method" value="X-ray"/>
    <property type="resolution" value="8.70 A"/>
    <property type="chains" value="L=2-125"/>
</dbReference>
<dbReference type="PDB" id="4V4A">
    <property type="method" value="X-ray"/>
    <property type="resolution" value="9.50 A"/>
    <property type="chains" value="L=2-125"/>
</dbReference>
<dbReference type="PDB" id="4V4I">
    <property type="method" value="X-ray"/>
    <property type="resolution" value="3.71 A"/>
    <property type="chains" value="m=1-132"/>
</dbReference>
<dbReference type="PDB" id="4V4P">
    <property type="method" value="X-ray"/>
    <property type="resolution" value="5.50 A"/>
    <property type="chains" value="BO=2-132"/>
</dbReference>
<dbReference type="PDB" id="4V4R">
    <property type="method" value="X-ray"/>
    <property type="resolution" value="5.90 A"/>
    <property type="chains" value="L=2-132"/>
</dbReference>
<dbReference type="PDB" id="4V4S">
    <property type="method" value="X-ray"/>
    <property type="resolution" value="6.76 A"/>
    <property type="chains" value="L=2-132"/>
</dbReference>
<dbReference type="PDB" id="4V4T">
    <property type="method" value="X-ray"/>
    <property type="resolution" value="6.46 A"/>
    <property type="chains" value="L=2-132"/>
</dbReference>
<dbReference type="PDB" id="4V4X">
    <property type="method" value="X-ray"/>
    <property type="resolution" value="5.00 A"/>
    <property type="chains" value="AO=1-132"/>
</dbReference>
<dbReference type="PDB" id="4V4Y">
    <property type="method" value="X-ray"/>
    <property type="resolution" value="5.50 A"/>
    <property type="chains" value="AO=1-132"/>
</dbReference>
<dbReference type="PDB" id="4V4Z">
    <property type="method" value="X-ray"/>
    <property type="resolution" value="4.51 A"/>
    <property type="chains" value="AO=1-132"/>
</dbReference>
<dbReference type="PDB" id="4V51">
    <property type="method" value="X-ray"/>
    <property type="resolution" value="2.80 A"/>
    <property type="chains" value="AL/CL=2-132"/>
</dbReference>
<dbReference type="PDB" id="4V5A">
    <property type="method" value="X-ray"/>
    <property type="resolution" value="3.50 A"/>
    <property type="chains" value="AL/CL=2-132"/>
</dbReference>
<dbReference type="PDB" id="4V5C">
    <property type="method" value="X-ray"/>
    <property type="resolution" value="3.30 A"/>
    <property type="chains" value="AL/CL=2-132"/>
</dbReference>
<dbReference type="PDB" id="4V5D">
    <property type="method" value="X-ray"/>
    <property type="resolution" value="3.50 A"/>
    <property type="chains" value="AL/CL=2-132"/>
</dbReference>
<dbReference type="PDB" id="4V5E">
    <property type="method" value="X-ray"/>
    <property type="resolution" value="3.45 A"/>
    <property type="chains" value="AL/CL=1-132"/>
</dbReference>
<dbReference type="PDB" id="4V5F">
    <property type="method" value="X-ray"/>
    <property type="resolution" value="3.60 A"/>
    <property type="chains" value="AL/CL=1-132"/>
</dbReference>
<dbReference type="PDB" id="4V5G">
    <property type="method" value="X-ray"/>
    <property type="resolution" value="3.60 A"/>
    <property type="chains" value="AL/CL=2-132"/>
</dbReference>
<dbReference type="PDB" id="4V5J">
    <property type="method" value="X-ray"/>
    <property type="resolution" value="3.10 A"/>
    <property type="chains" value="AL/CL=1-132"/>
</dbReference>
<dbReference type="PDB" id="4V5K">
    <property type="method" value="X-ray"/>
    <property type="resolution" value="3.20 A"/>
    <property type="chains" value="AL/CL=2-132"/>
</dbReference>
<dbReference type="PDB" id="4V5L">
    <property type="method" value="X-ray"/>
    <property type="resolution" value="3.10 A"/>
    <property type="chains" value="AL=2-132"/>
</dbReference>
<dbReference type="PDB" id="4V5M">
    <property type="method" value="EM"/>
    <property type="resolution" value="7.80 A"/>
    <property type="chains" value="AL=1-132"/>
</dbReference>
<dbReference type="PDB" id="4V5N">
    <property type="method" value="EM"/>
    <property type="resolution" value="7.60 A"/>
    <property type="chains" value="AL=1-132"/>
</dbReference>
<dbReference type="PDB" id="4V5P">
    <property type="method" value="X-ray"/>
    <property type="resolution" value="3.10 A"/>
    <property type="chains" value="AL/CL=2-132"/>
</dbReference>
<dbReference type="PDB" id="4V5Q">
    <property type="method" value="X-ray"/>
    <property type="resolution" value="3.10 A"/>
    <property type="chains" value="AL/CL=1-132"/>
</dbReference>
<dbReference type="PDB" id="4V5R">
    <property type="method" value="X-ray"/>
    <property type="resolution" value="3.10 A"/>
    <property type="chains" value="AL/CL=2-132"/>
</dbReference>
<dbReference type="PDB" id="4V5S">
    <property type="method" value="X-ray"/>
    <property type="resolution" value="3.10 A"/>
    <property type="chains" value="AL/CL=2-132"/>
</dbReference>
<dbReference type="PDB" id="4V68">
    <property type="method" value="EM"/>
    <property type="resolution" value="6.40 A"/>
    <property type="chains" value="AL=2-126"/>
</dbReference>
<dbReference type="PDB" id="4V6A">
    <property type="method" value="X-ray"/>
    <property type="resolution" value="3.10 A"/>
    <property type="chains" value="AL/CL=1-132"/>
</dbReference>
<dbReference type="PDB" id="4V6F">
    <property type="method" value="X-ray"/>
    <property type="resolution" value="3.10 A"/>
    <property type="chains" value="BO/CO=1-132"/>
</dbReference>
<dbReference type="PDB" id="4V6G">
    <property type="method" value="X-ray"/>
    <property type="resolution" value="3.50 A"/>
    <property type="chains" value="AO/CO=1-132"/>
</dbReference>
<dbReference type="PDB" id="4V7J">
    <property type="method" value="X-ray"/>
    <property type="resolution" value="3.30 A"/>
    <property type="chains" value="Al/Bl=1-132"/>
</dbReference>
<dbReference type="PDB" id="4V7K">
    <property type="method" value="X-ray"/>
    <property type="resolution" value="3.60 A"/>
    <property type="chains" value="Al/Bl=1-132"/>
</dbReference>
<dbReference type="PDB" id="4V7L">
    <property type="method" value="X-ray"/>
    <property type="resolution" value="3.00 A"/>
    <property type="chains" value="AL/CL=1-132"/>
</dbReference>
<dbReference type="PDB" id="4V7M">
    <property type="method" value="X-ray"/>
    <property type="resolution" value="3.45 A"/>
    <property type="chains" value="AL/CL=1-132"/>
</dbReference>
<dbReference type="PDB" id="4V7W">
    <property type="method" value="X-ray"/>
    <property type="resolution" value="3.00 A"/>
    <property type="chains" value="AL/CL=1-132"/>
</dbReference>
<dbReference type="PDB" id="4V7X">
    <property type="method" value="X-ray"/>
    <property type="resolution" value="3.00 A"/>
    <property type="chains" value="AL/CL=1-132"/>
</dbReference>
<dbReference type="PDB" id="4V7Y">
    <property type="method" value="X-ray"/>
    <property type="resolution" value="3.00 A"/>
    <property type="chains" value="AL/CL=1-132"/>
</dbReference>
<dbReference type="PDB" id="4V7Z">
    <property type="method" value="X-ray"/>
    <property type="resolution" value="3.10 A"/>
    <property type="chains" value="AL/CL=1-132"/>
</dbReference>
<dbReference type="PDB" id="4V87">
    <property type="method" value="X-ray"/>
    <property type="resolution" value="3.10 A"/>
    <property type="chains" value="BO/CO=1-132"/>
</dbReference>
<dbReference type="PDB" id="4V8A">
    <property type="method" value="X-ray"/>
    <property type="resolution" value="3.20 A"/>
    <property type="chains" value="CL/DL=1-132"/>
</dbReference>
<dbReference type="PDB" id="4V8B">
    <property type="method" value="X-ray"/>
    <property type="resolution" value="3.00 A"/>
    <property type="chains" value="AO/CO=1-128"/>
</dbReference>
<dbReference type="PDB" id="4V8C">
    <property type="method" value="X-ray"/>
    <property type="resolution" value="3.30 A"/>
    <property type="chains" value="CO/DO=1-132"/>
</dbReference>
<dbReference type="PDB" id="4V8D">
    <property type="method" value="X-ray"/>
    <property type="resolution" value="3.00 A"/>
    <property type="chains" value="AO/CO=1-132"/>
</dbReference>
<dbReference type="PDB" id="4V8E">
    <property type="method" value="X-ray"/>
    <property type="resolution" value="3.30 A"/>
    <property type="chains" value="BO/DO=1-132"/>
</dbReference>
<dbReference type="PDB" id="4V8F">
    <property type="method" value="X-ray"/>
    <property type="resolution" value="3.30 A"/>
    <property type="chains" value="BO/CO=1-132"/>
</dbReference>
<dbReference type="PDB" id="4V8G">
    <property type="method" value="X-ray"/>
    <property type="resolution" value="3.00 A"/>
    <property type="chains" value="AL/CL=1-132"/>
</dbReference>
<dbReference type="PDB" id="4V8H">
    <property type="method" value="X-ray"/>
    <property type="resolution" value="3.10 A"/>
    <property type="chains" value="AL/CL=1-132"/>
</dbReference>
<dbReference type="PDB" id="4V8I">
    <property type="method" value="X-ray"/>
    <property type="resolution" value="2.70 A"/>
    <property type="chains" value="AL/CL=1-132"/>
</dbReference>
<dbReference type="PDB" id="4V8J">
    <property type="method" value="X-ray"/>
    <property type="resolution" value="3.90 A"/>
    <property type="chains" value="AL/CL=1-132"/>
</dbReference>
<dbReference type="PDB" id="4V8N">
    <property type="method" value="X-ray"/>
    <property type="resolution" value="3.10 A"/>
    <property type="chains" value="AL/CL=2-132"/>
</dbReference>
<dbReference type="PDB" id="4V8O">
    <property type="method" value="X-ray"/>
    <property type="resolution" value="3.80 A"/>
    <property type="chains" value="AL=2-132"/>
</dbReference>
<dbReference type="PDB" id="4V8Q">
    <property type="method" value="X-ray"/>
    <property type="resolution" value="3.10 A"/>
    <property type="chains" value="BL=2-132"/>
</dbReference>
<dbReference type="PDB" id="4V8U">
    <property type="method" value="X-ray"/>
    <property type="resolution" value="3.70 A"/>
    <property type="chains" value="AL/CL=1-132"/>
</dbReference>
<dbReference type="PDB" id="4V8X">
    <property type="method" value="X-ray"/>
    <property type="resolution" value="3.35 A"/>
    <property type="chains" value="AL/CL=1-132"/>
</dbReference>
<dbReference type="PDB" id="4V90">
    <property type="method" value="X-ray"/>
    <property type="resolution" value="2.95 A"/>
    <property type="chains" value="AL=1-132"/>
</dbReference>
<dbReference type="PDB" id="4V95">
    <property type="method" value="X-ray"/>
    <property type="resolution" value="3.20 A"/>
    <property type="chains" value="AL/CL=1-132"/>
</dbReference>
<dbReference type="PDB" id="4V97">
    <property type="method" value="X-ray"/>
    <property type="resolution" value="3.52 A"/>
    <property type="chains" value="AL/CL=1-132"/>
</dbReference>
<dbReference type="PDB" id="4V9A">
    <property type="method" value="X-ray"/>
    <property type="resolution" value="3.30 A"/>
    <property type="chains" value="AO/CO=1-127"/>
</dbReference>
<dbReference type="PDB" id="4V9B">
    <property type="method" value="X-ray"/>
    <property type="resolution" value="3.10 A"/>
    <property type="chains" value="AO/CO=1-127"/>
</dbReference>
<dbReference type="PDB" id="4V9H">
    <property type="method" value="X-ray"/>
    <property type="resolution" value="2.86 A"/>
    <property type="chains" value="AL=2-125"/>
</dbReference>
<dbReference type="PDB" id="4V9I">
    <property type="method" value="X-ray"/>
    <property type="resolution" value="3.30 A"/>
    <property type="chains" value="AL/CL=2-125"/>
</dbReference>
<dbReference type="PDB" id="4V9R">
    <property type="method" value="X-ray"/>
    <property type="resolution" value="3.00 A"/>
    <property type="chains" value="AL/CL=1-132"/>
</dbReference>
<dbReference type="PDB" id="4V9S">
    <property type="method" value="X-ray"/>
    <property type="resolution" value="3.10 A"/>
    <property type="chains" value="AL/CL=1-132"/>
</dbReference>
<dbReference type="PDB" id="4W2E">
    <property type="method" value="X-ray"/>
    <property type="resolution" value="2.90 A"/>
    <property type="chains" value="l=1-132"/>
</dbReference>
<dbReference type="PDB" id="4W2F">
    <property type="method" value="X-ray"/>
    <property type="resolution" value="2.40 A"/>
    <property type="chains" value="AL/CL=1-132"/>
</dbReference>
<dbReference type="PDB" id="4W2G">
    <property type="method" value="X-ray"/>
    <property type="resolution" value="2.55 A"/>
    <property type="chains" value="AL/CL=1-132"/>
</dbReference>
<dbReference type="PDB" id="4W2H">
    <property type="method" value="X-ray"/>
    <property type="resolution" value="2.70 A"/>
    <property type="chains" value="AL/CL=1-132"/>
</dbReference>
<dbReference type="PDB" id="4W2I">
    <property type="method" value="X-ray"/>
    <property type="resolution" value="2.70 A"/>
    <property type="chains" value="AL/CL=1-132"/>
</dbReference>
<dbReference type="PDB" id="4W4G">
    <property type="method" value="X-ray"/>
    <property type="resolution" value="3.30 A"/>
    <property type="chains" value="QL/XL=1-132"/>
</dbReference>
<dbReference type="PDB" id="4WPO">
    <property type="method" value="X-ray"/>
    <property type="resolution" value="2.80 A"/>
    <property type="chains" value="BL/DL=1-132"/>
</dbReference>
<dbReference type="PDB" id="4WQ1">
    <property type="method" value="X-ray"/>
    <property type="resolution" value="3.10 A"/>
    <property type="chains" value="3A/3I=1-132"/>
</dbReference>
<dbReference type="PDB" id="4WQF">
    <property type="method" value="X-ray"/>
    <property type="resolution" value="2.80 A"/>
    <property type="chains" value="BL/DL=1-132"/>
</dbReference>
<dbReference type="PDB" id="4WQR">
    <property type="method" value="X-ray"/>
    <property type="resolution" value="3.15 A"/>
    <property type="chains" value="3A/3I=1-132"/>
</dbReference>
<dbReference type="PDB" id="4WQU">
    <property type="method" value="X-ray"/>
    <property type="resolution" value="2.80 A"/>
    <property type="chains" value="BL/DL=1-132"/>
</dbReference>
<dbReference type="PDB" id="4WQY">
    <property type="method" value="X-ray"/>
    <property type="resolution" value="2.80 A"/>
    <property type="chains" value="BL/DL=1-132"/>
</dbReference>
<dbReference type="PDB" id="4WR6">
    <property type="method" value="X-ray"/>
    <property type="resolution" value="3.05 A"/>
    <property type="chains" value="3A/3I=1-132"/>
</dbReference>
<dbReference type="PDB" id="4WRA">
    <property type="method" value="X-ray"/>
    <property type="resolution" value="3.05 A"/>
    <property type="chains" value="3A/3I=1-132"/>
</dbReference>
<dbReference type="PDB" id="4WRO">
    <property type="method" value="X-ray"/>
    <property type="resolution" value="3.05 A"/>
    <property type="chains" value="3I=1-132"/>
</dbReference>
<dbReference type="PDB" id="4WSD">
    <property type="method" value="X-ray"/>
    <property type="resolution" value="2.95 A"/>
    <property type="chains" value="3A/3I=1-132"/>
</dbReference>
<dbReference type="PDB" id="4WSM">
    <property type="method" value="X-ray"/>
    <property type="resolution" value="3.30 A"/>
    <property type="chains" value="3A/3I=1-132"/>
</dbReference>
<dbReference type="PDB" id="4WT1">
    <property type="method" value="X-ray"/>
    <property type="resolution" value="3.05 A"/>
    <property type="chains" value="3A/3I=1-132"/>
</dbReference>
<dbReference type="PDB" id="4WT8">
    <property type="method" value="X-ray"/>
    <property type="resolution" value="3.40 A"/>
    <property type="chains" value="AL/BL=2-125"/>
</dbReference>
<dbReference type="PDB" id="4WU1">
    <property type="method" value="X-ray"/>
    <property type="resolution" value="3.20 A"/>
    <property type="chains" value="3A/3I=1-132"/>
</dbReference>
<dbReference type="PDB" id="4WZD">
    <property type="method" value="X-ray"/>
    <property type="resolution" value="3.10 A"/>
    <property type="chains" value="3A/3I=1-132"/>
</dbReference>
<dbReference type="PDB" id="4WZO">
    <property type="method" value="X-ray"/>
    <property type="resolution" value="3.30 A"/>
    <property type="chains" value="3A/3I=1-132"/>
</dbReference>
<dbReference type="PDB" id="4X62">
    <property type="method" value="X-ray"/>
    <property type="resolution" value="3.45 A"/>
    <property type="chains" value="L=2-126"/>
</dbReference>
<dbReference type="PDB" id="4X64">
    <property type="method" value="X-ray"/>
    <property type="resolution" value="3.35 A"/>
    <property type="chains" value="L=2-126"/>
</dbReference>
<dbReference type="PDB" id="4X65">
    <property type="method" value="X-ray"/>
    <property type="resolution" value="3.35 A"/>
    <property type="chains" value="L=2-126"/>
</dbReference>
<dbReference type="PDB" id="4X66">
    <property type="method" value="X-ray"/>
    <property type="resolution" value="3.45 A"/>
    <property type="chains" value="L=2-126"/>
</dbReference>
<dbReference type="PDB" id="4Y4O">
    <property type="method" value="X-ray"/>
    <property type="resolution" value="2.30 A"/>
    <property type="chains" value="1l/2l=1-132"/>
</dbReference>
<dbReference type="PDB" id="4Y4P">
    <property type="method" value="X-ray"/>
    <property type="resolution" value="2.50 A"/>
    <property type="chains" value="1l/2l=1-132"/>
</dbReference>
<dbReference type="PDB" id="4YHH">
    <property type="method" value="X-ray"/>
    <property type="resolution" value="3.42 A"/>
    <property type="chains" value="L=2-125"/>
</dbReference>
<dbReference type="PDB" id="4YPB">
    <property type="method" value="X-ray"/>
    <property type="resolution" value="3.40 A"/>
    <property type="chains" value="QL/XL=1-132"/>
</dbReference>
<dbReference type="PDB" id="4YY3">
    <property type="method" value="X-ray"/>
    <property type="resolution" value="3.60 A"/>
    <property type="chains" value="L=1-132"/>
</dbReference>
<dbReference type="PDB" id="4YZV">
    <property type="method" value="X-ray"/>
    <property type="resolution" value="3.10 A"/>
    <property type="chains" value="QL/XL=1-132"/>
</dbReference>
<dbReference type="PDB" id="4Z3S">
    <property type="method" value="X-ray"/>
    <property type="resolution" value="2.65 A"/>
    <property type="chains" value="1l/2l=1-132"/>
</dbReference>
<dbReference type="PDB" id="4Z8C">
    <property type="method" value="X-ray"/>
    <property type="resolution" value="2.90 A"/>
    <property type="chains" value="1l/2l=1-132"/>
</dbReference>
<dbReference type="PDB" id="4ZER">
    <property type="method" value="X-ray"/>
    <property type="resolution" value="3.10 A"/>
    <property type="chains" value="1l/2l=2-123"/>
</dbReference>
<dbReference type="PDB" id="4ZSN">
    <property type="method" value="X-ray"/>
    <property type="resolution" value="3.60 A"/>
    <property type="chains" value="QL/XL=1-132"/>
</dbReference>
<dbReference type="PDB" id="5A9Z">
    <property type="method" value="EM"/>
    <property type="resolution" value="4.70 A"/>
    <property type="chains" value="BP=2-125"/>
</dbReference>
<dbReference type="PDB" id="5AA0">
    <property type="method" value="EM"/>
    <property type="resolution" value="5.00 A"/>
    <property type="chains" value="BP=2-125"/>
</dbReference>
<dbReference type="PDB" id="5BR8">
    <property type="method" value="X-ray"/>
    <property type="resolution" value="3.40 A"/>
    <property type="chains" value="L=2-132"/>
</dbReference>
<dbReference type="PDB" id="5CZP">
    <property type="method" value="X-ray"/>
    <property type="resolution" value="3.30 A"/>
    <property type="chains" value="QL/XL=1-132"/>
</dbReference>
<dbReference type="PDB" id="5D8B">
    <property type="method" value="X-ray"/>
    <property type="resolution" value="3.63 A"/>
    <property type="chains" value="IC/MA=1-132"/>
</dbReference>
<dbReference type="PDB" id="5DFE">
    <property type="method" value="X-ray"/>
    <property type="resolution" value="3.10 A"/>
    <property type="chains" value="QL/XL=1-132"/>
</dbReference>
<dbReference type="PDB" id="5DOX">
    <property type="method" value="X-ray"/>
    <property type="resolution" value="3.10 A"/>
    <property type="chains" value="1l/2l=1-132"/>
</dbReference>
<dbReference type="PDB" id="5DOY">
    <property type="method" value="X-ray"/>
    <property type="resolution" value="2.60 A"/>
    <property type="chains" value="1l/2l=1-132"/>
</dbReference>
<dbReference type="PDB" id="5E7K">
    <property type="method" value="X-ray"/>
    <property type="resolution" value="3.20 A"/>
    <property type="chains" value="3A/3I=1-132"/>
</dbReference>
<dbReference type="PDB" id="5E81">
    <property type="method" value="X-ray"/>
    <property type="resolution" value="2.95 A"/>
    <property type="chains" value="3A/3I=1-132"/>
</dbReference>
<dbReference type="PDB" id="5EL4">
    <property type="method" value="X-ray"/>
    <property type="resolution" value="3.15 A"/>
    <property type="chains" value="3A/3I=1-132"/>
</dbReference>
<dbReference type="PDB" id="5EL5">
    <property type="method" value="X-ray"/>
    <property type="resolution" value="3.15 A"/>
    <property type="chains" value="3A/3I=1-132"/>
</dbReference>
<dbReference type="PDB" id="5EL6">
    <property type="method" value="X-ray"/>
    <property type="resolution" value="3.10 A"/>
    <property type="chains" value="3A/3I=1-132"/>
</dbReference>
<dbReference type="PDB" id="5EL7">
    <property type="method" value="X-ray"/>
    <property type="resolution" value="3.15 A"/>
    <property type="chains" value="3A/3I=1-132"/>
</dbReference>
<dbReference type="PDB" id="5F8K">
    <property type="method" value="X-ray"/>
    <property type="resolution" value="2.80 A"/>
    <property type="chains" value="1l/2l=2-123"/>
</dbReference>
<dbReference type="PDB" id="5FDU">
    <property type="method" value="X-ray"/>
    <property type="resolution" value="2.90 A"/>
    <property type="chains" value="1l/2l=2-123"/>
</dbReference>
<dbReference type="PDB" id="5FDV">
    <property type="method" value="X-ray"/>
    <property type="resolution" value="2.80 A"/>
    <property type="chains" value="1l/2l=2-123"/>
</dbReference>
<dbReference type="PDB" id="5HAU">
    <property type="method" value="X-ray"/>
    <property type="resolution" value="3.00 A"/>
    <property type="chains" value="1l/2l=1-132"/>
</dbReference>
<dbReference type="PDB" id="5HCP">
    <property type="method" value="X-ray"/>
    <property type="resolution" value="2.89 A"/>
    <property type="chains" value="1l/2l=1-132"/>
</dbReference>
<dbReference type="PDB" id="5HCQ">
    <property type="method" value="X-ray"/>
    <property type="resolution" value="2.80 A"/>
    <property type="chains" value="1l/2l=1-132"/>
</dbReference>
<dbReference type="PDB" id="5HCR">
    <property type="method" value="X-ray"/>
    <property type="resolution" value="2.80 A"/>
    <property type="chains" value="1l/2l=1-132"/>
</dbReference>
<dbReference type="PDB" id="5HD1">
    <property type="method" value="X-ray"/>
    <property type="resolution" value="2.70 A"/>
    <property type="chains" value="1l/2l=1-132"/>
</dbReference>
<dbReference type="PDB" id="5IB7">
    <property type="method" value="X-ray"/>
    <property type="resolution" value="2.99 A"/>
    <property type="chains" value="3A/3I=1-132"/>
</dbReference>
<dbReference type="PDB" id="5IB8">
    <property type="method" value="X-ray"/>
    <property type="resolution" value="3.13 A"/>
    <property type="chains" value="3A/3I=1-132"/>
</dbReference>
<dbReference type="PDB" id="5IBB">
    <property type="method" value="X-ray"/>
    <property type="resolution" value="2.96 A"/>
    <property type="chains" value="3A/3I=1-132"/>
</dbReference>
<dbReference type="PDB" id="5IMQ">
    <property type="method" value="EM"/>
    <property type="resolution" value="3.80 A"/>
    <property type="chains" value="P=1-132"/>
</dbReference>
<dbReference type="PDB" id="5IMR">
    <property type="method" value="EM"/>
    <property type="chains" value="P=1-132"/>
</dbReference>
<dbReference type="PDB" id="5IWA">
    <property type="method" value="X-ray"/>
    <property type="resolution" value="3.50 A"/>
    <property type="chains" value="L=2-125"/>
</dbReference>
<dbReference type="PDB" id="5J30">
    <property type="method" value="X-ray"/>
    <property type="resolution" value="3.20 A"/>
    <property type="chains" value="QL/XL=1-132"/>
</dbReference>
<dbReference type="PDB" id="5J3C">
    <property type="method" value="X-ray"/>
    <property type="resolution" value="3.04 A"/>
    <property type="chains" value="QL/XL=1-132"/>
</dbReference>
<dbReference type="PDB" id="5J4B">
    <property type="method" value="X-ray"/>
    <property type="resolution" value="2.60 A"/>
    <property type="chains" value="1l/2l=1-132"/>
</dbReference>
<dbReference type="PDB" id="5J4C">
    <property type="method" value="X-ray"/>
    <property type="resolution" value="2.80 A"/>
    <property type="chains" value="1l/2l=1-132"/>
</dbReference>
<dbReference type="PDB" id="5J8B">
    <property type="method" value="X-ray"/>
    <property type="resolution" value="2.60 A"/>
    <property type="chains" value="l=1-132"/>
</dbReference>
<dbReference type="PDB" id="5LMN">
    <property type="method" value="EM"/>
    <property type="resolution" value="3.55 A"/>
    <property type="chains" value="L=1-132"/>
</dbReference>
<dbReference type="PDB" id="5LMO">
    <property type="method" value="EM"/>
    <property type="resolution" value="4.30 A"/>
    <property type="chains" value="L=1-132"/>
</dbReference>
<dbReference type="PDB" id="5LMP">
    <property type="method" value="EM"/>
    <property type="resolution" value="5.35 A"/>
    <property type="chains" value="L=1-132"/>
</dbReference>
<dbReference type="PDB" id="5LMQ">
    <property type="method" value="EM"/>
    <property type="resolution" value="4.20 A"/>
    <property type="chains" value="L=1-132"/>
</dbReference>
<dbReference type="PDB" id="5LMR">
    <property type="method" value="EM"/>
    <property type="resolution" value="4.45 A"/>
    <property type="chains" value="L=1-132"/>
</dbReference>
<dbReference type="PDB" id="5LMS">
    <property type="method" value="EM"/>
    <property type="resolution" value="5.10 A"/>
    <property type="chains" value="L=1-132"/>
</dbReference>
<dbReference type="PDB" id="5LMT">
    <property type="method" value="EM"/>
    <property type="resolution" value="4.15 A"/>
    <property type="chains" value="L=1-132"/>
</dbReference>
<dbReference type="PDB" id="5LMU">
    <property type="method" value="EM"/>
    <property type="resolution" value="4.00 A"/>
    <property type="chains" value="L=1-132"/>
</dbReference>
<dbReference type="PDB" id="5LMV">
    <property type="method" value="EM"/>
    <property type="resolution" value="4.90 A"/>
    <property type="chains" value="L=1-132"/>
</dbReference>
<dbReference type="PDB" id="5NDJ">
    <property type="method" value="X-ray"/>
    <property type="resolution" value="3.15 A"/>
    <property type="chains" value="3A/3I=1-132"/>
</dbReference>
<dbReference type="PDB" id="5NDK">
    <property type="method" value="X-ray"/>
    <property type="resolution" value="2.95 A"/>
    <property type="chains" value="3A/3I=1-132"/>
</dbReference>
<dbReference type="PDB" id="5OT7">
    <property type="method" value="EM"/>
    <property type="resolution" value="3.80 A"/>
    <property type="chains" value="K=2-126"/>
</dbReference>
<dbReference type="PDB" id="5UQ7">
    <property type="method" value="EM"/>
    <property type="resolution" value="3.50 A"/>
    <property type="chains" value="l=2-123"/>
</dbReference>
<dbReference type="PDB" id="5UQ8">
    <property type="method" value="EM"/>
    <property type="resolution" value="3.20 A"/>
    <property type="chains" value="l=2-123"/>
</dbReference>
<dbReference type="PDB" id="5VP2">
    <property type="method" value="X-ray"/>
    <property type="resolution" value="2.80 A"/>
    <property type="chains" value="1l/2l=1-132"/>
</dbReference>
<dbReference type="PDB" id="5VPO">
    <property type="method" value="X-ray"/>
    <property type="resolution" value="3.34 A"/>
    <property type="chains" value="QL/XL=1-132"/>
</dbReference>
<dbReference type="PDB" id="5VPP">
    <property type="method" value="X-ray"/>
    <property type="resolution" value="3.90 A"/>
    <property type="chains" value="QL/XL=1-132"/>
</dbReference>
<dbReference type="PDB" id="5W4K">
    <property type="method" value="X-ray"/>
    <property type="resolution" value="2.70 A"/>
    <property type="chains" value="1l/2l=1-132"/>
</dbReference>
<dbReference type="PDB" id="5WIS">
    <property type="method" value="X-ray"/>
    <property type="resolution" value="2.70 A"/>
    <property type="chains" value="1l/2l=1-132"/>
</dbReference>
<dbReference type="PDB" id="5WIT">
    <property type="method" value="X-ray"/>
    <property type="resolution" value="2.60 A"/>
    <property type="chains" value="1l/2l=1-132"/>
</dbReference>
<dbReference type="PDB" id="5WNP">
    <property type="method" value="X-ray"/>
    <property type="resolution" value="3.30 A"/>
    <property type="chains" value="L=2-126"/>
</dbReference>
<dbReference type="PDB" id="5WNQ">
    <property type="method" value="X-ray"/>
    <property type="resolution" value="3.50 A"/>
    <property type="chains" value="L=2-125"/>
</dbReference>
<dbReference type="PDB" id="5WNR">
    <property type="method" value="X-ray"/>
    <property type="resolution" value="3.50 A"/>
    <property type="chains" value="L=2-125"/>
</dbReference>
<dbReference type="PDB" id="5WNS">
    <property type="method" value="X-ray"/>
    <property type="resolution" value="3.50 A"/>
    <property type="chains" value="L=2-125"/>
</dbReference>
<dbReference type="PDB" id="5WNT">
    <property type="method" value="X-ray"/>
    <property type="resolution" value="3.30 A"/>
    <property type="chains" value="L=2-126"/>
</dbReference>
<dbReference type="PDB" id="5WNU">
    <property type="method" value="X-ray"/>
    <property type="resolution" value="3.40 A"/>
    <property type="chains" value="L=2-126"/>
</dbReference>
<dbReference type="PDB" id="5WNV">
    <property type="method" value="X-ray"/>
    <property type="resolution" value="3.30 A"/>
    <property type="chains" value="L=2-126"/>
</dbReference>
<dbReference type="PDB" id="5ZLU">
    <property type="method" value="EM"/>
    <property type="resolution" value="3.60 A"/>
    <property type="chains" value="Q=1-132"/>
</dbReference>
<dbReference type="PDB" id="6BUW">
    <property type="method" value="X-ray"/>
    <property type="resolution" value="3.50 A"/>
    <property type="chains" value="QL/XL=1-132"/>
</dbReference>
<dbReference type="PDB" id="6BZ6">
    <property type="method" value="X-ray"/>
    <property type="resolution" value="3.18 A"/>
    <property type="chains" value="QL/XL=1-132"/>
</dbReference>
<dbReference type="PDB" id="6BZ7">
    <property type="method" value="X-ray"/>
    <property type="resolution" value="3.68 A"/>
    <property type="chains" value="QL/XL=1-132"/>
</dbReference>
<dbReference type="PDB" id="6BZ8">
    <property type="method" value="X-ray"/>
    <property type="resolution" value="3.74 A"/>
    <property type="chains" value="QL/XL=1-132"/>
</dbReference>
<dbReference type="PDB" id="6C5L">
    <property type="method" value="X-ray"/>
    <property type="resolution" value="3.20 A"/>
    <property type="chains" value="AL/CL=1-132"/>
</dbReference>
<dbReference type="PDB" id="6CAE">
    <property type="method" value="X-ray"/>
    <property type="resolution" value="2.60 A"/>
    <property type="chains" value="1l/2l=1-132"/>
</dbReference>
<dbReference type="PDB" id="6CAO">
    <property type="method" value="X-ray"/>
    <property type="resolution" value="3.45 A"/>
    <property type="chains" value="L=2-126"/>
</dbReference>
<dbReference type="PDB" id="6CAP">
    <property type="method" value="X-ray"/>
    <property type="resolution" value="3.40 A"/>
    <property type="chains" value="L=2-125"/>
</dbReference>
<dbReference type="PDB" id="6CAQ">
    <property type="method" value="X-ray"/>
    <property type="resolution" value="3.40 A"/>
    <property type="chains" value="L=2-125"/>
</dbReference>
<dbReference type="PDB" id="6CAR">
    <property type="method" value="X-ray"/>
    <property type="resolution" value="3.40 A"/>
    <property type="chains" value="L=2-132"/>
</dbReference>
<dbReference type="PDB" id="6CAS">
    <property type="method" value="X-ray"/>
    <property type="resolution" value="3.50 A"/>
    <property type="chains" value="L=2-132"/>
</dbReference>
<dbReference type="PDB" id="6CFJ">
    <property type="method" value="X-ray"/>
    <property type="resolution" value="2.80 A"/>
    <property type="chains" value="1l/2l=1-132"/>
</dbReference>
<dbReference type="PDB" id="6CFK">
    <property type="method" value="X-ray"/>
    <property type="resolution" value="2.70 A"/>
    <property type="chains" value="1l/2l=1-132"/>
</dbReference>
<dbReference type="PDB" id="6CFL">
    <property type="method" value="X-ray"/>
    <property type="resolution" value="2.60 A"/>
    <property type="chains" value="1l/2l=1-132"/>
</dbReference>
<dbReference type="PDB" id="6CZR">
    <property type="method" value="X-ray"/>
    <property type="resolution" value="3.14 A"/>
    <property type="chains" value="1l/2l=2-123"/>
</dbReference>
<dbReference type="PDB" id="6DTI">
    <property type="method" value="X-ray"/>
    <property type="resolution" value="3.54 A"/>
    <property type="chains" value="L=1-132"/>
</dbReference>
<dbReference type="PDB" id="6FKR">
    <property type="method" value="X-ray"/>
    <property type="resolution" value="3.20 A"/>
    <property type="chains" value="1l/2l=2-123"/>
</dbReference>
<dbReference type="PDB" id="6GSJ">
    <property type="method" value="X-ray"/>
    <property type="resolution" value="2.96 A"/>
    <property type="chains" value="3A/3I=1-132"/>
</dbReference>
<dbReference type="PDB" id="6GSK">
    <property type="method" value="X-ray"/>
    <property type="resolution" value="3.36 A"/>
    <property type="chains" value="3A/3I=1-132"/>
</dbReference>
<dbReference type="PDB" id="6GSL">
    <property type="method" value="X-ray"/>
    <property type="resolution" value="3.16 A"/>
    <property type="chains" value="3A/3I=1-132"/>
</dbReference>
<dbReference type="PDB" id="6GZQ">
    <property type="method" value="EM"/>
    <property type="resolution" value="3.28 A"/>
    <property type="chains" value="L2=2-126"/>
</dbReference>
<dbReference type="PDB" id="6GZX">
    <property type="method" value="EM"/>
    <property type="resolution" value="4.57 A"/>
    <property type="chains" value="L3/L4=2-126"/>
</dbReference>
<dbReference type="PDB" id="6GZZ">
    <property type="method" value="EM"/>
    <property type="resolution" value="4.13 A"/>
    <property type="chains" value="L3/L4=2-126"/>
</dbReference>
<dbReference type="PDB" id="6MKN">
    <property type="method" value="X-ray"/>
    <property type="resolution" value="3.46 A"/>
    <property type="chains" value="L=1-132"/>
</dbReference>
<dbReference type="PDB" id="6MPF">
    <property type="method" value="X-ray"/>
    <property type="resolution" value="3.33 A"/>
    <property type="chains" value="L=2-125"/>
</dbReference>
<dbReference type="PDB" id="6MPI">
    <property type="method" value="X-ray"/>
    <property type="resolution" value="3.33 A"/>
    <property type="chains" value="L=1-132"/>
</dbReference>
<dbReference type="PDB" id="6N9E">
    <property type="method" value="X-ray"/>
    <property type="resolution" value="3.70 A"/>
    <property type="chains" value="1l/2l=1-132"/>
</dbReference>
<dbReference type="PDB" id="6N9F">
    <property type="method" value="X-ray"/>
    <property type="resolution" value="3.70 A"/>
    <property type="chains" value="1l/2l=1-132"/>
</dbReference>
<dbReference type="PDB" id="6ND5">
    <property type="method" value="X-ray"/>
    <property type="resolution" value="2.60 A"/>
    <property type="chains" value="1l/2l=1-132"/>
</dbReference>
<dbReference type="PDB" id="6ND6">
    <property type="method" value="X-ray"/>
    <property type="resolution" value="2.85 A"/>
    <property type="chains" value="1l/2l=1-132"/>
</dbReference>
<dbReference type="PDB" id="6NDK">
    <property type="method" value="X-ray"/>
    <property type="resolution" value="3.64 A"/>
    <property type="chains" value="QL/XL=1-132"/>
</dbReference>
<dbReference type="PDB" id="6NSH">
    <property type="method" value="X-ray"/>
    <property type="resolution" value="3.40 A"/>
    <property type="chains" value="QL/XL=1-132"/>
</dbReference>
<dbReference type="PDB" id="6NTA">
    <property type="method" value="X-ray"/>
    <property type="resolution" value="3.10 A"/>
    <property type="chains" value="QL/XL=1-132"/>
</dbReference>
<dbReference type="PDB" id="6NUO">
    <property type="method" value="X-ray"/>
    <property type="resolution" value="3.20 A"/>
    <property type="chains" value="QL/XL=1-132"/>
</dbReference>
<dbReference type="PDB" id="6NWY">
    <property type="method" value="X-ray"/>
    <property type="resolution" value="3.50 A"/>
    <property type="chains" value="QL/XL=1-132"/>
</dbReference>
<dbReference type="PDB" id="6NY6">
    <property type="method" value="X-ray"/>
    <property type="resolution" value="3.74 A"/>
    <property type="chains" value="L=1-132"/>
</dbReference>
<dbReference type="PDB" id="6O3M">
    <property type="method" value="X-ray"/>
    <property type="resolution" value="3.97 A"/>
    <property type="chains" value="QL/XL=1-132"/>
</dbReference>
<dbReference type="PDB" id="6O97">
    <property type="method" value="X-ray"/>
    <property type="resolution" value="2.75 A"/>
    <property type="chains" value="1l/2l=1-132"/>
</dbReference>
<dbReference type="PDB" id="6OF1">
    <property type="method" value="X-ray"/>
    <property type="resolution" value="2.80 A"/>
    <property type="chains" value="1l/2l=1-132"/>
</dbReference>
<dbReference type="PDB" id="6OF6">
    <property type="method" value="X-ray"/>
    <property type="resolution" value="3.20 A"/>
    <property type="chains" value="QL/XL=1-131"/>
</dbReference>
<dbReference type="PDB" id="6OJ2">
    <property type="method" value="X-ray"/>
    <property type="resolution" value="3.20 A"/>
    <property type="chains" value="QL/XL=1-131"/>
</dbReference>
<dbReference type="PDB" id="6OPE">
    <property type="method" value="X-ray"/>
    <property type="resolution" value="3.10 A"/>
    <property type="chains" value="QL/XL=1-131"/>
</dbReference>
<dbReference type="PDB" id="6ORD">
    <property type="method" value="X-ray"/>
    <property type="resolution" value="3.10 A"/>
    <property type="chains" value="QL/XL=1-132"/>
</dbReference>
<dbReference type="PDB" id="6OSI">
    <property type="method" value="X-ray"/>
    <property type="resolution" value="4.14 A"/>
    <property type="chains" value="QL/XL=1-132"/>
</dbReference>
<dbReference type="PDB" id="6OTR">
    <property type="method" value="X-ray"/>
    <property type="resolution" value="3.12 A"/>
    <property type="chains" value="QL/XL=1-132"/>
</dbReference>
<dbReference type="PDB" id="6OXA">
    <property type="method" value="X-ray"/>
    <property type="resolution" value="3.25 A"/>
    <property type="chains" value="QL/XL=1-132"/>
</dbReference>
<dbReference type="PDB" id="6OXI">
    <property type="method" value="X-ray"/>
    <property type="resolution" value="3.50 A"/>
    <property type="chains" value="QL/XL=1-132"/>
</dbReference>
<dbReference type="PDB" id="6Q95">
    <property type="method" value="EM"/>
    <property type="resolution" value="3.70 A"/>
    <property type="chains" value="q=2-126"/>
</dbReference>
<dbReference type="PDB" id="6QNQ">
    <property type="method" value="X-ray"/>
    <property type="resolution" value="3.50 A"/>
    <property type="chains" value="3A/3I=1-132"/>
</dbReference>
<dbReference type="PDB" id="6QNR">
    <property type="method" value="X-ray"/>
    <property type="resolution" value="3.10 A"/>
    <property type="chains" value="3A/3I=1-132"/>
</dbReference>
<dbReference type="PDB" id="6UCQ">
    <property type="method" value="X-ray"/>
    <property type="resolution" value="3.50 A"/>
    <property type="chains" value="1l/2l=1-132"/>
</dbReference>
<dbReference type="PDB" id="6UO1">
    <property type="method" value="X-ray"/>
    <property type="resolution" value="2.95 A"/>
    <property type="chains" value="1l/2l=1-132"/>
</dbReference>
<dbReference type="PDB" id="6XHV">
    <property type="method" value="X-ray"/>
    <property type="resolution" value="2.40 A"/>
    <property type="chains" value="1l/2l=1-132"/>
</dbReference>
<dbReference type="PDB" id="6XHW">
    <property type="method" value="X-ray"/>
    <property type="resolution" value="2.50 A"/>
    <property type="chains" value="1l/2l=1-132"/>
</dbReference>
<dbReference type="PDB" id="6XHX">
    <property type="method" value="X-ray"/>
    <property type="resolution" value="2.55 A"/>
    <property type="chains" value="1l/2l=1-132"/>
</dbReference>
<dbReference type="PDB" id="6XHY">
    <property type="method" value="X-ray"/>
    <property type="resolution" value="2.60 A"/>
    <property type="chains" value="1l/2l=1-132"/>
</dbReference>
<dbReference type="PDB" id="6XQD">
    <property type="method" value="X-ray"/>
    <property type="resolution" value="2.80 A"/>
    <property type="chains" value="1l/2l=1-132"/>
</dbReference>
<dbReference type="PDB" id="6XQE">
    <property type="method" value="X-ray"/>
    <property type="resolution" value="3.00 A"/>
    <property type="chains" value="1l/2l=1-132"/>
</dbReference>
<dbReference type="PDB" id="7AZO">
    <property type="method" value="X-ray"/>
    <property type="resolution" value="3.30 A"/>
    <property type="chains" value="S12A/S12B=1-132"/>
</dbReference>
<dbReference type="PDB" id="7AZS">
    <property type="method" value="X-ray"/>
    <property type="resolution" value="3.10 A"/>
    <property type="chains" value="S12A/S12B=1-132"/>
</dbReference>
<dbReference type="PDB" id="7DUG">
    <property type="method" value="X-ray"/>
    <property type="resolution" value="3.75 A"/>
    <property type="chains" value="L=1-132"/>
</dbReference>
<dbReference type="PDB" id="7DUH">
    <property type="method" value="X-ray"/>
    <property type="resolution" value="3.75 A"/>
    <property type="chains" value="L=1-132"/>
</dbReference>
<dbReference type="PDB" id="7DUI">
    <property type="method" value="X-ray"/>
    <property type="resolution" value="3.62 A"/>
    <property type="chains" value="L=1-132"/>
</dbReference>
<dbReference type="PDB" id="7DUJ">
    <property type="method" value="X-ray"/>
    <property type="resolution" value="3.75 A"/>
    <property type="chains" value="L=1-132"/>
</dbReference>
<dbReference type="PDB" id="7DUK">
    <property type="method" value="X-ray"/>
    <property type="resolution" value="3.60 A"/>
    <property type="chains" value="L=1-132"/>
</dbReference>
<dbReference type="PDB" id="7DUL">
    <property type="method" value="X-ray"/>
    <property type="resolution" value="3.62 A"/>
    <property type="chains" value="L=1-132"/>
</dbReference>
<dbReference type="PDB" id="7JQL">
    <property type="method" value="X-ray"/>
    <property type="resolution" value="3.00 A"/>
    <property type="chains" value="1l/2l=1-132"/>
</dbReference>
<dbReference type="PDB" id="7JQM">
    <property type="method" value="X-ray"/>
    <property type="resolution" value="3.05 A"/>
    <property type="chains" value="1l/2l=1-132"/>
</dbReference>
<dbReference type="PDB" id="7LH5">
    <property type="method" value="X-ray"/>
    <property type="resolution" value="3.27 A"/>
    <property type="chains" value="AL/CL=1-132"/>
</dbReference>
<dbReference type="PDB" id="7MD7">
    <property type="method" value="X-ray"/>
    <property type="resolution" value="2.80 A"/>
    <property type="chains" value="1l/2l=1-132"/>
</dbReference>
<dbReference type="PDB" id="7RQ8">
    <property type="method" value="X-ray"/>
    <property type="resolution" value="2.50 A"/>
    <property type="chains" value="1l/2l=1-132"/>
</dbReference>
<dbReference type="PDB" id="7RQ9">
    <property type="method" value="X-ray"/>
    <property type="resolution" value="2.60 A"/>
    <property type="chains" value="1l/2l=1-132"/>
</dbReference>
<dbReference type="PDB" id="7RQA">
    <property type="method" value="X-ray"/>
    <property type="resolution" value="2.40 A"/>
    <property type="chains" value="1l/2l=1-132"/>
</dbReference>
<dbReference type="PDB" id="7RQB">
    <property type="method" value="X-ray"/>
    <property type="resolution" value="2.45 A"/>
    <property type="chains" value="1l/2l=1-132"/>
</dbReference>
<dbReference type="PDB" id="7RQC">
    <property type="method" value="X-ray"/>
    <property type="resolution" value="2.50 A"/>
    <property type="chains" value="1l/2l=1-132"/>
</dbReference>
<dbReference type="PDB" id="7RQD">
    <property type="method" value="X-ray"/>
    <property type="resolution" value="2.50 A"/>
    <property type="chains" value="1l/2l=1-132"/>
</dbReference>
<dbReference type="PDB" id="7RQE">
    <property type="method" value="X-ray"/>
    <property type="resolution" value="2.40 A"/>
    <property type="chains" value="1l/2l=1-132"/>
</dbReference>
<dbReference type="PDB" id="7U2H">
    <property type="method" value="X-ray"/>
    <property type="resolution" value="2.55 A"/>
    <property type="chains" value="1l/2l=1-132"/>
</dbReference>
<dbReference type="PDB" id="7U2I">
    <property type="method" value="X-ray"/>
    <property type="resolution" value="2.55 A"/>
    <property type="chains" value="1l/2l=1-132"/>
</dbReference>
<dbReference type="PDB" id="7U2J">
    <property type="method" value="X-ray"/>
    <property type="resolution" value="2.55 A"/>
    <property type="chains" value="1l/2l=1-132"/>
</dbReference>
<dbReference type="PDB" id="7V2L">
    <property type="method" value="EM"/>
    <property type="resolution" value="3.30 A"/>
    <property type="chains" value="L=1-132"/>
</dbReference>
<dbReference type="PDB" id="7V2M">
    <property type="method" value="EM"/>
    <property type="resolution" value="3.40 A"/>
    <property type="chains" value="L=1-132"/>
</dbReference>
<dbReference type="PDB" id="7V2N">
    <property type="method" value="EM"/>
    <property type="resolution" value="3.60 A"/>
    <property type="chains" value="L=1-132"/>
</dbReference>
<dbReference type="PDB" id="7V2O">
    <property type="method" value="EM"/>
    <property type="resolution" value="3.50 A"/>
    <property type="chains" value="L=1-132"/>
</dbReference>
<dbReference type="PDB" id="7V2P">
    <property type="method" value="EM"/>
    <property type="resolution" value="3.30 A"/>
    <property type="chains" value="L=1-132"/>
</dbReference>
<dbReference type="PDB" id="7V2Q">
    <property type="method" value="EM"/>
    <property type="resolution" value="3.24 A"/>
    <property type="chains" value="L=1-132"/>
</dbReference>
<dbReference type="PDB" id="8CVJ">
    <property type="method" value="X-ray"/>
    <property type="resolution" value="2.40 A"/>
    <property type="chains" value="1l/2l=1-132"/>
</dbReference>
<dbReference type="PDB" id="8CVK">
    <property type="method" value="X-ray"/>
    <property type="resolution" value="2.50 A"/>
    <property type="chains" value="1l/2l=1-132"/>
</dbReference>
<dbReference type="PDB" id="8CVL">
    <property type="method" value="X-ray"/>
    <property type="resolution" value="2.30 A"/>
    <property type="chains" value="1l/2l=1-132"/>
</dbReference>
<dbReference type="PDB" id="8EKB">
    <property type="method" value="X-ray"/>
    <property type="resolution" value="2.70 A"/>
    <property type="chains" value="1l/2l=1-132"/>
</dbReference>
<dbReference type="PDB" id="8EV6">
    <property type="method" value="X-ray"/>
    <property type="resolution" value="2.95 A"/>
    <property type="chains" value="1l/2l=1-132"/>
</dbReference>
<dbReference type="PDB" id="8EV7">
    <property type="method" value="X-ray"/>
    <property type="resolution" value="2.89 A"/>
    <property type="chains" value="1l/2l=1-132"/>
</dbReference>
<dbReference type="PDB" id="8FC1">
    <property type="method" value="X-ray"/>
    <property type="resolution" value="2.50 A"/>
    <property type="chains" value="1l/2l=1-132"/>
</dbReference>
<dbReference type="PDB" id="8FC2">
    <property type="method" value="X-ray"/>
    <property type="resolution" value="2.50 A"/>
    <property type="chains" value="1l/2l=1-132"/>
</dbReference>
<dbReference type="PDB" id="8FC3">
    <property type="method" value="X-ray"/>
    <property type="resolution" value="2.60 A"/>
    <property type="chains" value="1l/2l=1-132"/>
</dbReference>
<dbReference type="PDB" id="8FC4">
    <property type="method" value="X-ray"/>
    <property type="resolution" value="2.45 A"/>
    <property type="chains" value="1l/2l=1-132"/>
</dbReference>
<dbReference type="PDB" id="8FC5">
    <property type="method" value="X-ray"/>
    <property type="resolution" value="2.65 A"/>
    <property type="chains" value="1l/2l=1-132"/>
</dbReference>
<dbReference type="PDB" id="8FC6">
    <property type="method" value="X-ray"/>
    <property type="resolution" value="2.35 A"/>
    <property type="chains" value="1l/2l=1-132"/>
</dbReference>
<dbReference type="PDB" id="8FOM">
    <property type="method" value="X-ray"/>
    <property type="resolution" value="3.58 A"/>
    <property type="chains" value="QL/XL=1-131"/>
</dbReference>
<dbReference type="PDB" id="8FON">
    <property type="method" value="X-ray"/>
    <property type="resolution" value="3.64 A"/>
    <property type="chains" value="QL/XL=1-131"/>
</dbReference>
<dbReference type="PDB" id="8G29">
    <property type="method" value="X-ray"/>
    <property type="resolution" value="2.55 A"/>
    <property type="chains" value="1l/2l=1-132"/>
</dbReference>
<dbReference type="PDB" id="8G2A">
    <property type="method" value="X-ray"/>
    <property type="resolution" value="2.45 A"/>
    <property type="chains" value="1l/2l=1-132"/>
</dbReference>
<dbReference type="PDB" id="8G2B">
    <property type="method" value="X-ray"/>
    <property type="resolution" value="2.55 A"/>
    <property type="chains" value="1l/2l=1-132"/>
</dbReference>
<dbReference type="PDB" id="8G2C">
    <property type="method" value="X-ray"/>
    <property type="resolution" value="2.65 A"/>
    <property type="chains" value="1l/2l=1-132"/>
</dbReference>
<dbReference type="PDB" id="8G2D">
    <property type="method" value="X-ray"/>
    <property type="resolution" value="2.70 A"/>
    <property type="chains" value="1l/2l=1-132"/>
</dbReference>
<dbReference type="PDB" id="8T8B">
    <property type="method" value="X-ray"/>
    <property type="resolution" value="2.65 A"/>
    <property type="chains" value="1l/2l=1-132"/>
</dbReference>
<dbReference type="PDB" id="8T8C">
    <property type="method" value="X-ray"/>
    <property type="resolution" value="2.60 A"/>
    <property type="chains" value="1l/2l=1-132"/>
</dbReference>
<dbReference type="PDB" id="8UD6">
    <property type="method" value="X-ray"/>
    <property type="resolution" value="2.70 A"/>
    <property type="chains" value="1l/2l=1-132"/>
</dbReference>
<dbReference type="PDB" id="8UD7">
    <property type="method" value="X-ray"/>
    <property type="resolution" value="2.55 A"/>
    <property type="chains" value="1l/2l=1-132"/>
</dbReference>
<dbReference type="PDB" id="8UD8">
    <property type="method" value="X-ray"/>
    <property type="resolution" value="2.60 A"/>
    <property type="chains" value="1l/2l=1-132"/>
</dbReference>
<dbReference type="PDB" id="8UVR">
    <property type="method" value="X-ray"/>
    <property type="resolution" value="2.60 A"/>
    <property type="chains" value="1l/2l=1-132"/>
</dbReference>
<dbReference type="PDB" id="8UVS">
    <property type="method" value="X-ray"/>
    <property type="resolution" value="2.75 A"/>
    <property type="chains" value="1l/2l=1-132"/>
</dbReference>
<dbReference type="PDB" id="8VTU">
    <property type="method" value="X-ray"/>
    <property type="resolution" value="2.40 A"/>
    <property type="chains" value="1l/2l=1-132"/>
</dbReference>
<dbReference type="PDB" id="8VTV">
    <property type="method" value="X-ray"/>
    <property type="resolution" value="2.55 A"/>
    <property type="chains" value="1l/2l=1-132"/>
</dbReference>
<dbReference type="PDB" id="8VTW">
    <property type="method" value="X-ray"/>
    <property type="resolution" value="2.35 A"/>
    <property type="chains" value="1l/2l=1-132"/>
</dbReference>
<dbReference type="PDB" id="8VTX">
    <property type="method" value="X-ray"/>
    <property type="resolution" value="2.40 A"/>
    <property type="chains" value="1l/2l=1-132"/>
</dbReference>
<dbReference type="PDB" id="8VTY">
    <property type="method" value="X-ray"/>
    <property type="resolution" value="2.60 A"/>
    <property type="chains" value="1l/2l=1-132"/>
</dbReference>
<dbReference type="PDB" id="9B00">
    <property type="method" value="X-ray"/>
    <property type="resolution" value="2.80 A"/>
    <property type="chains" value="1l/2l=1-132"/>
</dbReference>
<dbReference type="PDB" id="9D0J">
    <property type="method" value="X-ray"/>
    <property type="resolution" value="2.50 A"/>
    <property type="chains" value="1l/2l=1-132"/>
</dbReference>
<dbReference type="PDB" id="9D7R">
    <property type="method" value="X-ray"/>
    <property type="resolution" value="2.70 A"/>
    <property type="chains" value="1l/2l=1-132"/>
</dbReference>
<dbReference type="PDB" id="9D7S">
    <property type="method" value="X-ray"/>
    <property type="resolution" value="2.85 A"/>
    <property type="chains" value="1l/2l=1-132"/>
</dbReference>
<dbReference type="PDB" id="9D7T">
    <property type="method" value="X-ray"/>
    <property type="resolution" value="2.70 A"/>
    <property type="chains" value="1l/2l=1-132"/>
</dbReference>
<dbReference type="PDB" id="9DFC">
    <property type="method" value="X-ray"/>
    <property type="resolution" value="2.50 A"/>
    <property type="chains" value="1l/2l=1-132"/>
</dbReference>
<dbReference type="PDB" id="9DFD">
    <property type="method" value="X-ray"/>
    <property type="resolution" value="2.60 A"/>
    <property type="chains" value="1l/2l=1-132"/>
</dbReference>
<dbReference type="PDB" id="9DFE">
    <property type="method" value="X-ray"/>
    <property type="resolution" value="2.60 A"/>
    <property type="chains" value="1l/2l=1-132"/>
</dbReference>
<dbReference type="PDBsum" id="1FJG"/>
<dbReference type="PDBsum" id="1HNW"/>
<dbReference type="PDBsum" id="1HNX"/>
<dbReference type="PDBsum" id="1HNZ"/>
<dbReference type="PDBsum" id="1HR0"/>
<dbReference type="PDBsum" id="1I94"/>
<dbReference type="PDBsum" id="1I95"/>
<dbReference type="PDBsum" id="1I96"/>
<dbReference type="PDBsum" id="1I97"/>
<dbReference type="PDBsum" id="1IBK"/>
<dbReference type="PDBsum" id="1IBL"/>
<dbReference type="PDBsum" id="1IBM"/>
<dbReference type="PDBsum" id="1J5E"/>
<dbReference type="PDBsum" id="1JGO"/>
<dbReference type="PDBsum" id="1JGP"/>
<dbReference type="PDBsum" id="1JGQ"/>
<dbReference type="PDBsum" id="1ML5"/>
<dbReference type="PDBsum" id="1MVR"/>
<dbReference type="PDBsum" id="1N32"/>
<dbReference type="PDBsum" id="1N33"/>
<dbReference type="PDBsum" id="1N34"/>
<dbReference type="PDBsum" id="1N36"/>
<dbReference type="PDBsum" id="1PN7"/>
<dbReference type="PDBsum" id="1PN8"/>
<dbReference type="PDBsum" id="1QZC"/>
<dbReference type="PDBsum" id="1VVJ"/>
<dbReference type="PDBsum" id="1VY4"/>
<dbReference type="PDBsum" id="1VY5"/>
<dbReference type="PDBsum" id="1VY6"/>
<dbReference type="PDBsum" id="1VY7"/>
<dbReference type="PDBsum" id="1XMO"/>
<dbReference type="PDBsum" id="1XMQ"/>
<dbReference type="PDBsum" id="1XNQ"/>
<dbReference type="PDBsum" id="1XNR"/>
<dbReference type="PDBsum" id="2E5L"/>
<dbReference type="PDBsum" id="2F4V"/>
<dbReference type="PDBsum" id="2HHH"/>
<dbReference type="PDBsum" id="2UU9"/>
<dbReference type="PDBsum" id="2UUA"/>
<dbReference type="PDBsum" id="2UUB"/>
<dbReference type="PDBsum" id="2UUC"/>
<dbReference type="PDBsum" id="2UXB"/>
<dbReference type="PDBsum" id="2UXC"/>
<dbReference type="PDBsum" id="2UXD"/>
<dbReference type="PDBsum" id="2VQE"/>
<dbReference type="PDBsum" id="2VQF"/>
<dbReference type="PDBsum" id="2ZM6"/>
<dbReference type="PDBsum" id="3OTO"/>
<dbReference type="PDBsum" id="3T1H"/>
<dbReference type="PDBsum" id="3T1Y"/>
<dbReference type="PDBsum" id="4AQY"/>
<dbReference type="PDBsum" id="4B3M"/>
<dbReference type="PDBsum" id="4B3R"/>
<dbReference type="PDBsum" id="4B3S"/>
<dbReference type="PDBsum" id="4B3T"/>
<dbReference type="PDBsum" id="4DR1"/>
<dbReference type="PDBsum" id="4DR2"/>
<dbReference type="PDBsum" id="4DR3"/>
<dbReference type="PDBsum" id="4DR4"/>
<dbReference type="PDBsum" id="4DR5"/>
<dbReference type="PDBsum" id="4DR6"/>
<dbReference type="PDBsum" id="4DR7"/>
<dbReference type="PDBsum" id="4DUY"/>
<dbReference type="PDBsum" id="4DUZ"/>
<dbReference type="PDBsum" id="4DV0"/>
<dbReference type="PDBsum" id="4DV1"/>
<dbReference type="PDBsum" id="4DV2"/>
<dbReference type="PDBsum" id="4DV3"/>
<dbReference type="PDBsum" id="4DV4"/>
<dbReference type="PDBsum" id="4DV5"/>
<dbReference type="PDBsum" id="4DV6"/>
<dbReference type="PDBsum" id="4DV7"/>
<dbReference type="PDBsum" id="4GKJ"/>
<dbReference type="PDBsum" id="4GKK"/>
<dbReference type="PDBsum" id="4JI0"/>
<dbReference type="PDBsum" id="4JI1"/>
<dbReference type="PDBsum" id="4JI2"/>
<dbReference type="PDBsum" id="4JI3"/>
<dbReference type="PDBsum" id="4JI4"/>
<dbReference type="PDBsum" id="4JI5"/>
<dbReference type="PDBsum" id="4JI6"/>
<dbReference type="PDBsum" id="4JI7"/>
<dbReference type="PDBsum" id="4JI8"/>
<dbReference type="PDBsum" id="4JV5"/>
<dbReference type="PDBsum" id="4JYA"/>
<dbReference type="PDBsum" id="4K0K"/>
<dbReference type="PDBsum" id="4KHP"/>
<dbReference type="PDBsum" id="4L47"/>
<dbReference type="PDBsum" id="4L71"/>
<dbReference type="PDBsum" id="4LEL"/>
<dbReference type="PDBsum" id="4LFZ"/>
<dbReference type="PDBsum" id="4LNT"/>
<dbReference type="PDBsum" id="4LSK"/>
<dbReference type="PDBsum" id="4LT8"/>
<dbReference type="PDBsum" id="4OX9"/>
<dbReference type="PDBsum" id="4P6F"/>
<dbReference type="PDBsum" id="4P70"/>
<dbReference type="PDBsum" id="4TUA"/>
<dbReference type="PDBsum" id="4TUB"/>
<dbReference type="PDBsum" id="4TUC"/>
<dbReference type="PDBsum" id="4TUD"/>
<dbReference type="PDBsum" id="4TUE"/>
<dbReference type="PDBsum" id="4V42"/>
<dbReference type="PDBsum" id="4V49"/>
<dbReference type="PDBsum" id="4V4A"/>
<dbReference type="PDBsum" id="4V4I"/>
<dbReference type="PDBsum" id="4V4P"/>
<dbReference type="PDBsum" id="4V4R"/>
<dbReference type="PDBsum" id="4V4S"/>
<dbReference type="PDBsum" id="4V4T"/>
<dbReference type="PDBsum" id="4V4X"/>
<dbReference type="PDBsum" id="4V4Y"/>
<dbReference type="PDBsum" id="4V4Z"/>
<dbReference type="PDBsum" id="4V51"/>
<dbReference type="PDBsum" id="4V5A"/>
<dbReference type="PDBsum" id="4V5C"/>
<dbReference type="PDBsum" id="4V5D"/>
<dbReference type="PDBsum" id="4V5E"/>
<dbReference type="PDBsum" id="4V5F"/>
<dbReference type="PDBsum" id="4V5G"/>
<dbReference type="PDBsum" id="4V5J"/>
<dbReference type="PDBsum" id="4V5K"/>
<dbReference type="PDBsum" id="4V5L"/>
<dbReference type="PDBsum" id="4V5M"/>
<dbReference type="PDBsum" id="4V5N"/>
<dbReference type="PDBsum" id="4V5P"/>
<dbReference type="PDBsum" id="4V5Q"/>
<dbReference type="PDBsum" id="4V5R"/>
<dbReference type="PDBsum" id="4V5S"/>
<dbReference type="PDBsum" id="4V68"/>
<dbReference type="PDBsum" id="4V6A"/>
<dbReference type="PDBsum" id="4V6F"/>
<dbReference type="PDBsum" id="4V6G"/>
<dbReference type="PDBsum" id="4V7J"/>
<dbReference type="PDBsum" id="4V7K"/>
<dbReference type="PDBsum" id="4V7L"/>
<dbReference type="PDBsum" id="4V7M"/>
<dbReference type="PDBsum" id="4V7W"/>
<dbReference type="PDBsum" id="4V7X"/>
<dbReference type="PDBsum" id="4V7Y"/>
<dbReference type="PDBsum" id="4V7Z"/>
<dbReference type="PDBsum" id="4V87"/>
<dbReference type="PDBsum" id="4V8A"/>
<dbReference type="PDBsum" id="4V8B"/>
<dbReference type="PDBsum" id="4V8C"/>
<dbReference type="PDBsum" id="4V8D"/>
<dbReference type="PDBsum" id="4V8E"/>
<dbReference type="PDBsum" id="4V8F"/>
<dbReference type="PDBsum" id="4V8G"/>
<dbReference type="PDBsum" id="4V8H"/>
<dbReference type="PDBsum" id="4V8I"/>
<dbReference type="PDBsum" id="4V8J"/>
<dbReference type="PDBsum" id="4V8N"/>
<dbReference type="PDBsum" id="4V8O"/>
<dbReference type="PDBsum" id="4V8Q"/>
<dbReference type="PDBsum" id="4V8U"/>
<dbReference type="PDBsum" id="4V8X"/>
<dbReference type="PDBsum" id="4V90"/>
<dbReference type="PDBsum" id="4V95"/>
<dbReference type="PDBsum" id="4V97"/>
<dbReference type="PDBsum" id="4V9A"/>
<dbReference type="PDBsum" id="4V9B"/>
<dbReference type="PDBsum" id="4V9H"/>
<dbReference type="PDBsum" id="4V9I"/>
<dbReference type="PDBsum" id="4V9R"/>
<dbReference type="PDBsum" id="4V9S"/>
<dbReference type="PDBsum" id="4W2E"/>
<dbReference type="PDBsum" id="4W2F"/>
<dbReference type="PDBsum" id="4W2G"/>
<dbReference type="PDBsum" id="4W2H"/>
<dbReference type="PDBsum" id="4W2I"/>
<dbReference type="PDBsum" id="4W4G"/>
<dbReference type="PDBsum" id="4WPO"/>
<dbReference type="PDBsum" id="4WQ1"/>
<dbReference type="PDBsum" id="4WQF"/>
<dbReference type="PDBsum" id="4WQR"/>
<dbReference type="PDBsum" id="4WQU"/>
<dbReference type="PDBsum" id="4WQY"/>
<dbReference type="PDBsum" id="4WR6"/>
<dbReference type="PDBsum" id="4WRA"/>
<dbReference type="PDBsum" id="4WRO"/>
<dbReference type="PDBsum" id="4WSD"/>
<dbReference type="PDBsum" id="4WSM"/>
<dbReference type="PDBsum" id="4WT1"/>
<dbReference type="PDBsum" id="4WT8"/>
<dbReference type="PDBsum" id="4WU1"/>
<dbReference type="PDBsum" id="4WZD"/>
<dbReference type="PDBsum" id="4WZO"/>
<dbReference type="PDBsum" id="4X62"/>
<dbReference type="PDBsum" id="4X64"/>
<dbReference type="PDBsum" id="4X65"/>
<dbReference type="PDBsum" id="4X66"/>
<dbReference type="PDBsum" id="4Y4O"/>
<dbReference type="PDBsum" id="4Y4P"/>
<dbReference type="PDBsum" id="4YHH"/>
<dbReference type="PDBsum" id="4YPB"/>
<dbReference type="PDBsum" id="4YY3"/>
<dbReference type="PDBsum" id="4YZV"/>
<dbReference type="PDBsum" id="4Z3S"/>
<dbReference type="PDBsum" id="4Z8C"/>
<dbReference type="PDBsum" id="4ZER"/>
<dbReference type="PDBsum" id="4ZSN"/>
<dbReference type="PDBsum" id="5A9Z"/>
<dbReference type="PDBsum" id="5AA0"/>
<dbReference type="PDBsum" id="5BR8"/>
<dbReference type="PDBsum" id="5CZP"/>
<dbReference type="PDBsum" id="5D8B"/>
<dbReference type="PDBsum" id="5DFE"/>
<dbReference type="PDBsum" id="5DOX"/>
<dbReference type="PDBsum" id="5DOY"/>
<dbReference type="PDBsum" id="5E7K"/>
<dbReference type="PDBsum" id="5E81"/>
<dbReference type="PDBsum" id="5EL4"/>
<dbReference type="PDBsum" id="5EL5"/>
<dbReference type="PDBsum" id="5EL6"/>
<dbReference type="PDBsum" id="5EL7"/>
<dbReference type="PDBsum" id="5F8K"/>
<dbReference type="PDBsum" id="5FDU"/>
<dbReference type="PDBsum" id="5FDV"/>
<dbReference type="PDBsum" id="5HAU"/>
<dbReference type="PDBsum" id="5HCP"/>
<dbReference type="PDBsum" id="5HCQ"/>
<dbReference type="PDBsum" id="5HCR"/>
<dbReference type="PDBsum" id="5HD1"/>
<dbReference type="PDBsum" id="5IB7"/>
<dbReference type="PDBsum" id="5IB8"/>
<dbReference type="PDBsum" id="5IBB"/>
<dbReference type="PDBsum" id="5IMQ"/>
<dbReference type="PDBsum" id="5IMR"/>
<dbReference type="PDBsum" id="5IWA"/>
<dbReference type="PDBsum" id="5J30"/>
<dbReference type="PDBsum" id="5J3C"/>
<dbReference type="PDBsum" id="5J4B"/>
<dbReference type="PDBsum" id="5J4C"/>
<dbReference type="PDBsum" id="5J8B"/>
<dbReference type="PDBsum" id="5LMN"/>
<dbReference type="PDBsum" id="5LMO"/>
<dbReference type="PDBsum" id="5LMP"/>
<dbReference type="PDBsum" id="5LMQ"/>
<dbReference type="PDBsum" id="5LMR"/>
<dbReference type="PDBsum" id="5LMS"/>
<dbReference type="PDBsum" id="5LMT"/>
<dbReference type="PDBsum" id="5LMU"/>
<dbReference type="PDBsum" id="5LMV"/>
<dbReference type="PDBsum" id="5NDJ"/>
<dbReference type="PDBsum" id="5NDK"/>
<dbReference type="PDBsum" id="5OT7"/>
<dbReference type="PDBsum" id="5UQ7"/>
<dbReference type="PDBsum" id="5UQ8"/>
<dbReference type="PDBsum" id="5VP2"/>
<dbReference type="PDBsum" id="5VPO"/>
<dbReference type="PDBsum" id="5VPP"/>
<dbReference type="PDBsum" id="5W4K"/>
<dbReference type="PDBsum" id="5WIS"/>
<dbReference type="PDBsum" id="5WIT"/>
<dbReference type="PDBsum" id="5WNP"/>
<dbReference type="PDBsum" id="5WNQ"/>
<dbReference type="PDBsum" id="5WNR"/>
<dbReference type="PDBsum" id="5WNS"/>
<dbReference type="PDBsum" id="5WNT"/>
<dbReference type="PDBsum" id="5WNU"/>
<dbReference type="PDBsum" id="5WNV"/>
<dbReference type="PDBsum" id="5ZLU"/>
<dbReference type="PDBsum" id="6BUW"/>
<dbReference type="PDBsum" id="6BZ6"/>
<dbReference type="PDBsum" id="6BZ7"/>
<dbReference type="PDBsum" id="6BZ8"/>
<dbReference type="PDBsum" id="6C5L"/>
<dbReference type="PDBsum" id="6CAE"/>
<dbReference type="PDBsum" id="6CAO"/>
<dbReference type="PDBsum" id="6CAP"/>
<dbReference type="PDBsum" id="6CAQ"/>
<dbReference type="PDBsum" id="6CAR"/>
<dbReference type="PDBsum" id="6CAS"/>
<dbReference type="PDBsum" id="6CFJ"/>
<dbReference type="PDBsum" id="6CFK"/>
<dbReference type="PDBsum" id="6CFL"/>
<dbReference type="PDBsum" id="6CZR"/>
<dbReference type="PDBsum" id="6DTI"/>
<dbReference type="PDBsum" id="6FKR"/>
<dbReference type="PDBsum" id="6GSJ"/>
<dbReference type="PDBsum" id="6GSK"/>
<dbReference type="PDBsum" id="6GSL"/>
<dbReference type="PDBsum" id="6GZQ"/>
<dbReference type="PDBsum" id="6GZX"/>
<dbReference type="PDBsum" id="6GZZ"/>
<dbReference type="PDBsum" id="6MKN"/>
<dbReference type="PDBsum" id="6MPF"/>
<dbReference type="PDBsum" id="6MPI"/>
<dbReference type="PDBsum" id="6N9E"/>
<dbReference type="PDBsum" id="6N9F"/>
<dbReference type="PDBsum" id="6ND5"/>
<dbReference type="PDBsum" id="6ND6"/>
<dbReference type="PDBsum" id="6NDK"/>
<dbReference type="PDBsum" id="6NSH"/>
<dbReference type="PDBsum" id="6NTA"/>
<dbReference type="PDBsum" id="6NUO"/>
<dbReference type="PDBsum" id="6NWY"/>
<dbReference type="PDBsum" id="6NY6"/>
<dbReference type="PDBsum" id="6O3M"/>
<dbReference type="PDBsum" id="6O97"/>
<dbReference type="PDBsum" id="6OF1"/>
<dbReference type="PDBsum" id="6OF6"/>
<dbReference type="PDBsum" id="6OJ2"/>
<dbReference type="PDBsum" id="6OPE"/>
<dbReference type="PDBsum" id="6ORD"/>
<dbReference type="PDBsum" id="6OSI"/>
<dbReference type="PDBsum" id="6OTR"/>
<dbReference type="PDBsum" id="6OXA"/>
<dbReference type="PDBsum" id="6OXI"/>
<dbReference type="PDBsum" id="6Q95"/>
<dbReference type="PDBsum" id="6QNQ"/>
<dbReference type="PDBsum" id="6QNR"/>
<dbReference type="PDBsum" id="6UCQ"/>
<dbReference type="PDBsum" id="6UO1"/>
<dbReference type="PDBsum" id="6XHV"/>
<dbReference type="PDBsum" id="6XHW"/>
<dbReference type="PDBsum" id="6XHX"/>
<dbReference type="PDBsum" id="6XHY"/>
<dbReference type="PDBsum" id="6XQD"/>
<dbReference type="PDBsum" id="6XQE"/>
<dbReference type="PDBsum" id="7AZO"/>
<dbReference type="PDBsum" id="7AZS"/>
<dbReference type="PDBsum" id="7DUG"/>
<dbReference type="PDBsum" id="7DUH"/>
<dbReference type="PDBsum" id="7DUI"/>
<dbReference type="PDBsum" id="7DUJ"/>
<dbReference type="PDBsum" id="7DUK"/>
<dbReference type="PDBsum" id="7DUL"/>
<dbReference type="PDBsum" id="7JQL"/>
<dbReference type="PDBsum" id="7JQM"/>
<dbReference type="PDBsum" id="7LH5"/>
<dbReference type="PDBsum" id="7MD7"/>
<dbReference type="PDBsum" id="7RQ8"/>
<dbReference type="PDBsum" id="7RQ9"/>
<dbReference type="PDBsum" id="7RQA"/>
<dbReference type="PDBsum" id="7RQB"/>
<dbReference type="PDBsum" id="7RQC"/>
<dbReference type="PDBsum" id="7RQD"/>
<dbReference type="PDBsum" id="7RQE"/>
<dbReference type="PDBsum" id="7U2H"/>
<dbReference type="PDBsum" id="7U2I"/>
<dbReference type="PDBsum" id="7U2J"/>
<dbReference type="PDBsum" id="7V2L"/>
<dbReference type="PDBsum" id="7V2M"/>
<dbReference type="PDBsum" id="7V2N"/>
<dbReference type="PDBsum" id="7V2O"/>
<dbReference type="PDBsum" id="7V2P"/>
<dbReference type="PDBsum" id="7V2Q"/>
<dbReference type="PDBsum" id="8CVJ"/>
<dbReference type="PDBsum" id="8CVK"/>
<dbReference type="PDBsum" id="8CVL"/>
<dbReference type="PDBsum" id="8EKB"/>
<dbReference type="PDBsum" id="8EV6"/>
<dbReference type="PDBsum" id="8EV7"/>
<dbReference type="PDBsum" id="8FC1"/>
<dbReference type="PDBsum" id="8FC2"/>
<dbReference type="PDBsum" id="8FC3"/>
<dbReference type="PDBsum" id="8FC4"/>
<dbReference type="PDBsum" id="8FC5"/>
<dbReference type="PDBsum" id="8FC6"/>
<dbReference type="PDBsum" id="8FOM"/>
<dbReference type="PDBsum" id="8FON"/>
<dbReference type="PDBsum" id="8G29"/>
<dbReference type="PDBsum" id="8G2A"/>
<dbReference type="PDBsum" id="8G2B"/>
<dbReference type="PDBsum" id="8G2C"/>
<dbReference type="PDBsum" id="8G2D"/>
<dbReference type="PDBsum" id="8T8B"/>
<dbReference type="PDBsum" id="8T8C"/>
<dbReference type="PDBsum" id="8UD6"/>
<dbReference type="PDBsum" id="8UD7"/>
<dbReference type="PDBsum" id="8UD8"/>
<dbReference type="PDBsum" id="8UVR"/>
<dbReference type="PDBsum" id="8UVS"/>
<dbReference type="PDBsum" id="8VTU"/>
<dbReference type="PDBsum" id="8VTV"/>
<dbReference type="PDBsum" id="8VTW"/>
<dbReference type="PDBsum" id="8VTX"/>
<dbReference type="PDBsum" id="8VTY"/>
<dbReference type="PDBsum" id="9B00"/>
<dbReference type="PDBsum" id="9D0J"/>
<dbReference type="PDBsum" id="9D7R"/>
<dbReference type="PDBsum" id="9D7S"/>
<dbReference type="PDBsum" id="9D7T"/>
<dbReference type="PDBsum" id="9DFC"/>
<dbReference type="PDBsum" id="9DFD"/>
<dbReference type="PDBsum" id="9DFE"/>
<dbReference type="EMDB" id="EMD-0101"/>
<dbReference type="EMDB" id="EMD-0104"/>
<dbReference type="EMDB" id="EMD-0105"/>
<dbReference type="EMDB" id="EMD-31655"/>
<dbReference type="EMDB" id="EMD-31656"/>
<dbReference type="EMDB" id="EMD-31657"/>
<dbReference type="EMDB" id="EMD-31658"/>
<dbReference type="EMDB" id="EMD-31659"/>
<dbReference type="EMDB" id="EMD-31660"/>
<dbReference type="EMDB" id="EMD-3852"/>
<dbReference type="EMDB" id="EMD-4073"/>
<dbReference type="EMDB" id="EMD-4074"/>
<dbReference type="EMDB" id="EMD-4075"/>
<dbReference type="EMDB" id="EMD-4076"/>
<dbReference type="EMDB" id="EMD-4077"/>
<dbReference type="EMDB" id="EMD-4078"/>
<dbReference type="EMDB" id="EMD-4079"/>
<dbReference type="EMDB" id="EMD-4080"/>
<dbReference type="EMDB" id="EMD-4083"/>
<dbReference type="EMDB" id="EMD-4475"/>
<dbReference type="EMDB" id="EMD-6934"/>
<dbReference type="EMDB" id="EMD-8596"/>
<dbReference type="EMDB" id="EMD-8597"/>
<dbReference type="SMR" id="Q5SHN3"/>
<dbReference type="IntAct" id="Q5SHN3">
    <property type="interactions" value="11"/>
</dbReference>
<dbReference type="DrugBank" id="DB08185">
    <property type="generic name" value="2-METHYLTHIO-N6-ISOPENTENYL-ADENOSINE-5'-MONOPHOSPHATE"/>
</dbReference>
<dbReference type="EnsemblBacteria" id="BAD71520">
    <property type="protein sequence ID" value="BAD71520"/>
    <property type="gene ID" value="BAD71520"/>
</dbReference>
<dbReference type="KEGG" id="ttj:TTHA1697"/>
<dbReference type="PATRIC" id="fig|300852.9.peg.1667"/>
<dbReference type="eggNOG" id="COG0048">
    <property type="taxonomic scope" value="Bacteria"/>
</dbReference>
<dbReference type="HOGENOM" id="CLU_104295_1_2_0"/>
<dbReference type="EvolutionaryTrace" id="Q5SHN3"/>
<dbReference type="Proteomes" id="UP000000532">
    <property type="component" value="Chromosome"/>
</dbReference>
<dbReference type="GO" id="GO:0015935">
    <property type="term" value="C:small ribosomal subunit"/>
    <property type="evidence" value="ECO:0007669"/>
    <property type="project" value="InterPro"/>
</dbReference>
<dbReference type="GO" id="GO:0019843">
    <property type="term" value="F:rRNA binding"/>
    <property type="evidence" value="ECO:0007669"/>
    <property type="project" value="UniProtKB-UniRule"/>
</dbReference>
<dbReference type="GO" id="GO:0003735">
    <property type="term" value="F:structural constituent of ribosome"/>
    <property type="evidence" value="ECO:0007669"/>
    <property type="project" value="InterPro"/>
</dbReference>
<dbReference type="GO" id="GO:0000049">
    <property type="term" value="F:tRNA binding"/>
    <property type="evidence" value="ECO:0007669"/>
    <property type="project" value="UniProtKB-UniRule"/>
</dbReference>
<dbReference type="GO" id="GO:0006412">
    <property type="term" value="P:translation"/>
    <property type="evidence" value="ECO:0007669"/>
    <property type="project" value="UniProtKB-UniRule"/>
</dbReference>
<dbReference type="CDD" id="cd03368">
    <property type="entry name" value="Ribosomal_S12"/>
    <property type="match status" value="1"/>
</dbReference>
<dbReference type="FunFam" id="2.40.50.140:FF:000001">
    <property type="entry name" value="30S ribosomal protein S12"/>
    <property type="match status" value="1"/>
</dbReference>
<dbReference type="Gene3D" id="2.40.50.140">
    <property type="entry name" value="Nucleic acid-binding proteins"/>
    <property type="match status" value="1"/>
</dbReference>
<dbReference type="HAMAP" id="MF_00403_B">
    <property type="entry name" value="Ribosomal_uS12_B"/>
    <property type="match status" value="1"/>
</dbReference>
<dbReference type="InterPro" id="IPR012340">
    <property type="entry name" value="NA-bd_OB-fold"/>
</dbReference>
<dbReference type="InterPro" id="IPR006032">
    <property type="entry name" value="Ribosomal_uS12"/>
</dbReference>
<dbReference type="InterPro" id="IPR005679">
    <property type="entry name" value="Ribosomal_uS12_bac"/>
</dbReference>
<dbReference type="NCBIfam" id="TIGR00981">
    <property type="entry name" value="rpsL_bact"/>
    <property type="match status" value="1"/>
</dbReference>
<dbReference type="PANTHER" id="PTHR11652">
    <property type="entry name" value="30S RIBOSOMAL PROTEIN S12 FAMILY MEMBER"/>
    <property type="match status" value="1"/>
</dbReference>
<dbReference type="Pfam" id="PF00164">
    <property type="entry name" value="Ribosom_S12_S23"/>
    <property type="match status" value="1"/>
</dbReference>
<dbReference type="PIRSF" id="PIRSF002133">
    <property type="entry name" value="Ribosomal_S12/S23"/>
    <property type="match status" value="1"/>
</dbReference>
<dbReference type="PRINTS" id="PR01034">
    <property type="entry name" value="RIBOSOMALS12"/>
</dbReference>
<dbReference type="SUPFAM" id="SSF50249">
    <property type="entry name" value="Nucleic acid-binding proteins"/>
    <property type="match status" value="1"/>
</dbReference>
<dbReference type="PROSITE" id="PS00055">
    <property type="entry name" value="RIBOSOMAL_S12"/>
    <property type="match status" value="1"/>
</dbReference>
<keyword id="KW-0002">3D-structure</keyword>
<keyword id="KW-0903">Direct protein sequencing</keyword>
<keyword id="KW-0488">Methylation</keyword>
<keyword id="KW-1185">Reference proteome</keyword>
<keyword id="KW-0687">Ribonucleoprotein</keyword>
<keyword id="KW-0689">Ribosomal protein</keyword>
<keyword id="KW-0694">RNA-binding</keyword>
<keyword id="KW-0699">rRNA-binding</keyword>
<keyword id="KW-0820">tRNA-binding</keyword>
<protein>
    <recommendedName>
        <fullName evidence="17">Small ribosomal subunit protein uS12</fullName>
    </recommendedName>
    <alternativeName>
        <fullName>30S ribosomal protein S12</fullName>
    </alternativeName>
</protein>
<accession>Q5SHN3</accession>
<feature type="initiator methionine" description="Removed" evidence="16">
    <location>
        <position position="1"/>
    </location>
</feature>
<feature type="chain" id="PRO_0000146341" description="Small ribosomal subunit protein uS12">
    <location>
        <begin position="2"/>
        <end position="132"/>
    </location>
</feature>
<feature type="region of interest" description="Disordered" evidence="2">
    <location>
        <begin position="106"/>
        <end position="132"/>
    </location>
</feature>
<feature type="compositionally biased region" description="Basic residues" evidence="2">
    <location>
        <begin position="109"/>
        <end position="120"/>
    </location>
</feature>
<feature type="modified residue" description="3-methylthioaspartic acid" evidence="13 14">
    <location>
        <position position="89"/>
    </location>
</feature>
<feature type="helix" evidence="21">
    <location>
        <begin position="4"/>
        <end position="9"/>
    </location>
</feature>
<feature type="strand" evidence="21">
    <location>
        <begin position="24"/>
        <end position="26"/>
    </location>
</feature>
<feature type="strand" evidence="21">
    <location>
        <begin position="28"/>
        <end position="35"/>
    </location>
</feature>
<feature type="strand" evidence="24">
    <location>
        <begin position="43"/>
        <end position="45"/>
    </location>
</feature>
<feature type="strand" evidence="19">
    <location>
        <begin position="50"/>
        <end position="52"/>
    </location>
</feature>
<feature type="strand" evidence="21">
    <location>
        <begin position="54"/>
        <end position="57"/>
    </location>
</feature>
<feature type="turn" evidence="22">
    <location>
        <begin position="58"/>
        <end position="60"/>
    </location>
</feature>
<feature type="strand" evidence="21">
    <location>
        <begin position="62"/>
        <end position="66"/>
    </location>
</feature>
<feature type="strand" evidence="20">
    <location>
        <begin position="69"/>
        <end position="71"/>
    </location>
</feature>
<feature type="strand" evidence="21">
    <location>
        <begin position="79"/>
        <end position="84"/>
    </location>
</feature>
<feature type="strand" evidence="23">
    <location>
        <begin position="88"/>
        <end position="90"/>
    </location>
</feature>
<feature type="strand" evidence="21">
    <location>
        <begin position="95"/>
        <end position="97"/>
    </location>
</feature>
<feature type="turn" evidence="20">
    <location>
        <begin position="101"/>
        <end position="104"/>
    </location>
</feature>
<feature type="helix" evidence="21">
    <location>
        <begin position="114"/>
        <end position="117"/>
    </location>
</feature>
<feature type="helix" evidence="18">
    <location>
        <begin position="123"/>
        <end position="125"/>
    </location>
</feature>
<feature type="strand" evidence="19">
    <location>
        <begin position="128"/>
        <end position="130"/>
    </location>
</feature>
<sequence>MPTINQLVRKGREKVRKKSKVPALKGAPFRRGVCTVVRTVTPKKPNSALRKVAKVRLTSGYEVTAYIPGEGHNLQEHSVVLIRGGRVKDLPGVRYHIVRGVYDAAGVKDRKKSRSKYGTKKPKEAAKTAAKK</sequence>
<name>RS12_THET8</name>
<proteinExistence type="evidence at protein level"/>
<gene>
    <name type="primary">rpsL</name>
    <name type="ordered locus">TTHA1697</name>
</gene>
<reference key="1">
    <citation type="journal article" date="1990" name="Nucleic Acids Res.">
        <title>Nucleotide sequence of the Thermus thermophilus HB8 rps12 and rps7 genes coding for the ribosomal proteins S12 and S7.</title>
        <authorList>
            <person name="Yakhnin A.V."/>
            <person name="Vorozheykina D.P."/>
            <person name="Matvienko N.I."/>
        </authorList>
    </citation>
    <scope>NUCLEOTIDE SEQUENCE [GENOMIC DNA]</scope>
</reference>
<reference key="2">
    <citation type="submission" date="2004-11" db="EMBL/GenBank/DDBJ databases">
        <title>Complete genome sequence of Thermus thermophilus HB8.</title>
        <authorList>
            <person name="Masui R."/>
            <person name="Kurokawa K."/>
            <person name="Nakagawa N."/>
            <person name="Tokunaga F."/>
            <person name="Koyama Y."/>
            <person name="Shibata T."/>
            <person name="Oshima T."/>
            <person name="Yokoyama S."/>
            <person name="Yasunaga T."/>
            <person name="Kuramitsu S."/>
        </authorList>
    </citation>
    <scope>NUCLEOTIDE SEQUENCE [LARGE SCALE GENOMIC DNA]</scope>
    <source>
        <strain>ATCC 27634 / DSM 579 / HB8</strain>
    </source>
</reference>
<reference key="3">
    <citation type="journal article" date="1994" name="Eur. J. Biochem.">
        <title>Purification and characterization of the 30S ribosomal proteins from the bacterium Thermus thermophilus.</title>
        <authorList>
            <person name="Tsiboli P."/>
            <person name="Herfurth E."/>
            <person name="Choli T."/>
        </authorList>
    </citation>
    <scope>PROTEIN SEQUENCE OF 2-29</scope>
</reference>
<reference key="4">
    <citation type="journal article" date="2005" name="Proteomics">
        <title>Extending ribosomal protein identifications to unsequenced bacterial strains using matrix-assisted laser desorption/ionization mass spectrometry.</title>
        <authorList>
            <person name="Suh M.-J."/>
            <person name="Hamburg D.M."/>
            <person name="Gregory S.T."/>
            <person name="Dahlberg A.E."/>
            <person name="Limbach P.A."/>
        </authorList>
    </citation>
    <scope>METHYLTHIOLATION AT ASP-89</scope>
    <scope>MASS SPECTROMETRY</scope>
    <source>
        <strain>ATCC 27634 / DSM 579 / HB8</strain>
    </source>
</reference>
<reference key="5">
    <citation type="journal article" date="2000" name="Nature">
        <title>Structure of the 30S ribosomal subunit.</title>
        <authorList>
            <person name="Wimberly B.T."/>
            <person name="Brodersen D.E."/>
            <person name="Clemons W.M. Jr."/>
            <person name="Morgan-Warren R.J."/>
            <person name="Carter A.P."/>
            <person name="Vonrhein C."/>
            <person name="Hartsch T."/>
            <person name="Ramakrishnan V."/>
        </authorList>
    </citation>
    <scope>X-RAY CRYSTALLOGRAPHY (3.05 ANGSTROMS) OF THE 30S SUBUNIT</scope>
    <scope>SUBUNIT</scope>
</reference>
<reference key="6">
    <citation type="journal article" date="2000" name="Cell">
        <title>Structure of functionally activated small ribosomal subunit at 3.3 A resolution.</title>
        <authorList>
            <person name="Schluenzen F."/>
            <person name="Tocilj A."/>
            <person name="Zarivach R."/>
            <person name="Harms J."/>
            <person name="Gluehmann M."/>
            <person name="Janell D."/>
            <person name="Bashan A."/>
            <person name="Bartels H."/>
            <person name="Agmon I."/>
            <person name="Franceschi F."/>
            <person name="Yonath A."/>
        </authorList>
    </citation>
    <scope>X-RAY CRYSTALLOGRAPHY (3.3 ANGSTROMS) OF THE 30S SUBUNIT</scope>
    <scope>SUBUNIT</scope>
</reference>
<reference key="7">
    <citation type="journal article" date="2000" name="Cell">
        <title>The structural basis for the action of the antibiotics tetracycline, pactamycin, and hygromycin B on the 30S ribosomal subunit.</title>
        <authorList>
            <person name="Brodersen D.E."/>
            <person name="Clemons W.M. Jr."/>
            <person name="Carter A.P."/>
            <person name="Morgan-Warren R.J."/>
            <person name="Wimberly B.T."/>
            <person name="Ramakrishnan V."/>
        </authorList>
    </citation>
    <scope>X-RAY CRYSTALLOGRAPHY (3.3 ANGSTROMS) OF THE 30S SUBUNIT</scope>
    <scope>SUBUNIT</scope>
</reference>
<reference key="8">
    <citation type="journal article" date="2000" name="Nature">
        <title>Functional insights from the structure of the 30S ribosomal subunit and its interactions with antibiotics.</title>
        <authorList>
            <person name="Carter A.P."/>
            <person name="Clemons W.M. Jr."/>
            <person name="Brodersen D.E."/>
            <person name="Morgan-Warren R.J."/>
            <person name="Wimberly B.T."/>
            <person name="Ramakrishnan V."/>
        </authorList>
    </citation>
    <scope>X-RAY CRYSTALLOGRAPHY (3.0 ANGSTROMS) OF THE 30S SUBUNIT</scope>
    <scope>SUBUNIT</scope>
</reference>
<reference key="9">
    <citation type="journal article" date="2001" name="Cell">
        <title>The path of messenger RNA through the ribosome.</title>
        <authorList>
            <person name="Yusupova G.Z."/>
            <person name="Yusupov M.M."/>
            <person name="Cate J.H.D."/>
            <person name="Noller H.F."/>
        </authorList>
    </citation>
    <scope>X-RAY CRYSTALLOGRAPHY (5.00 ANGSTROMS) OF THE RIBOSOME</scope>
    <scope>SUBUNIT</scope>
</reference>
<reference key="10">
    <citation type="journal article" date="2001" name="EMBO J.">
        <title>Crystal structures of complexes of the small ribosomal subunit with tetracycline, edeine and IF3.</title>
        <authorList>
            <person name="Pioletti M."/>
            <person name="Schluenzen F."/>
            <person name="Harms J."/>
            <person name="Zarivach R."/>
            <person name="Gluehmann M."/>
            <person name="Avila H."/>
            <person name="Bashan A."/>
            <person name="Bartels H."/>
            <person name="Auerbach T."/>
            <person name="Jacobi C."/>
            <person name="Hartsch T."/>
            <person name="Yonath A."/>
            <person name="Franceschi F."/>
        </authorList>
    </citation>
    <scope>X-RAY CRYSTALLOGRAPHY (3.2 ANGSTROMS) OF THE 30S SUBUNIT</scope>
    <scope>SUBUNIT</scope>
</reference>
<reference key="11">
    <citation type="journal article" date="2001" name="Science">
        <title>Crystal structure of an initiation factor bound to the 30S ribosomal subunit.</title>
        <authorList>
            <person name="Carter A.P."/>
            <person name="Clemons W.M. Jr."/>
            <person name="Brodersen D.E."/>
            <person name="Morgan-Warren R.J."/>
            <person name="Hartsch T."/>
            <person name="Wimberly B.T."/>
            <person name="Ramakrishnan V."/>
        </authorList>
    </citation>
    <scope>X-RAY CRYSTALLOGRAPHY (3.20 ANGSTROMS) OF 2-132</scope>
    <scope>FUNCTION</scope>
    <scope>INTERACTION WITH IF1</scope>
    <scope>SUBUNIT</scope>
</reference>
<reference key="12">
    <citation type="journal article" date="2001" name="Science">
        <title>Crystal structure of the ribosome at 5.5 A resolution.</title>
        <authorList>
            <person name="Yusupov M.M."/>
            <person name="Yusupova G.Z."/>
            <person name="Baucom A."/>
            <person name="Lieberman K."/>
            <person name="Earnest T.N."/>
            <person name="Cate J.H.D."/>
            <person name="Noller H.F."/>
        </authorList>
    </citation>
    <scope>X-RAY CRYSTALLOGRAPHY (5.5 ANGSTROMS) OF THE RIBOSOME</scope>
    <scope>FUNCTION</scope>
    <scope>SUBUNIT</scope>
</reference>
<reference key="13">
    <citation type="journal article" date="2001" name="Science">
        <title>Recognition of cognate transfer RNA by the 30S ribosomal subunit.</title>
        <authorList>
            <person name="Ogle J.M."/>
            <person name="Brodersen D.E."/>
            <person name="Clemons W.M. Jr."/>
            <person name="Tarry M.J."/>
            <person name="Carter A.P."/>
            <person name="Ramakrishnan V."/>
        </authorList>
    </citation>
    <scope>X-RAY CRYSTALLOGRAPHY (3.11 ANGSTROMS) OF THE 30S SUBUNIT</scope>
    <scope>SUBUNIT</scope>
</reference>
<reference key="14">
    <citation type="journal article" date="2002" name="J. Mol. Biol.">
        <title>Crystal structure of the 30S ribosomal subunit from Thermus thermophilus: structure of the proteins and their interactions with 16S RNA.</title>
        <authorList>
            <person name="Brodersen D.E."/>
            <person name="Clemons W.M. Jr."/>
            <person name="Carter A.P."/>
            <person name="Wimberly B.T."/>
            <person name="Ramakrishnan V."/>
        </authorList>
    </citation>
    <scope>X-RAY CRYSTALLOGRAPHY (3.05 ANGSTROMS) OF THE 30S SUBUNIT</scope>
    <scope>SUBUNIT</scope>
</reference>
<reference key="15">
    <citation type="journal article" date="2005" name="Cell">
        <title>Crystal structures of the ribosome in complex with release factors RF1 and RF2 bound to a cognate stop codon.</title>
        <authorList>
            <person name="Petry S."/>
            <person name="Brodersen D.E."/>
            <person name="Murphy F.V."/>
            <person name="Dunham C.M."/>
            <person name="Selmer M."/>
            <person name="Tarry M.J."/>
            <person name="Kelley A.C."/>
            <person name="Ramakrishnan V."/>
        </authorList>
    </citation>
    <scope>X-RAY CRYSTALLOGRAPHY (6.76 ANGSTROMS) OF 2-132 IN 70S RIBOSOME IN COMPLEX WITH RF1 OR RF2</scope>
    <scope>SUBUNIT</scope>
</reference>
<reference key="16">
    <citation type="journal article" date="2008" name="Science">
        <title>Insights into translational termination from the structure of RF2 bound to the ribosome.</title>
        <authorList>
            <person name="Weixlbaumer A."/>
            <person name="Jin H."/>
            <person name="Neubauer C."/>
            <person name="Voorhees R.M."/>
            <person name="Petry S."/>
            <person name="Kelley A.C."/>
            <person name="Ramakrishnan V."/>
        </authorList>
    </citation>
    <scope>X-RAY CRYSTALLOGRAPHY (3.45 ANGSTROMS) OF 70S RIBOSOME IN COMPLEX WITH RF2</scope>
    <scope>SUBUNIT</scope>
</reference>
<reference key="17">
    <citation type="journal article" date="2010" name="Proc. Natl. Acad. Sci. U.S.A.">
        <title>Structure of the 70S ribosome bound to release factor 2 and a substrate analog provides insights into catalysis of peptide release.</title>
        <authorList>
            <person name="Jin H."/>
            <person name="Kelley A.C."/>
            <person name="Loakes D."/>
            <person name="Ramakrishnan V."/>
        </authorList>
    </citation>
    <scope>X-RAY CRYSTALLOGRAPHY (3.10 ANGSTROMS) OF 70S RIBOSOME IN COMPLEX WITH RF2</scope>
    <scope>SUBUNIT</scope>
</reference>
<reference key="18">
    <citation type="journal article" date="2015" name="Nat. Struct. Mol. Biol.">
        <title>Structural insights into the role of rRNA modifications in protein synthesis and ribosome assembly.</title>
        <authorList>
            <person name="Polikanov Y.S."/>
            <person name="Melnikov S.V."/>
            <person name="Soll D."/>
            <person name="Steitz T.A."/>
        </authorList>
    </citation>
    <scope>X-RAY CRYSTALLOGRAPHY (2.30 ANGSTROMS) OF THE 70S RIBOSOME</scope>
    <scope>SUBUNIT</scope>
    <scope>METHYLTHIOLATION AT ASP-89</scope>
</reference>
<reference key="19">
    <citation type="journal article" date="2016" name="Nucleic Acids Res.">
        <title>Structure of the mammalian antimicrobial peptide Bac7(1-16) bound within the exit tunnel of a bacterial ribosome.</title>
        <authorList>
            <person name="Seefeldt A.C."/>
            <person name="Graf M."/>
            <person name="Perebaskine N."/>
            <person name="Nguyen F."/>
            <person name="Arenz S."/>
            <person name="Mardirossian M."/>
            <person name="Scocchi M."/>
            <person name="Wilson D.N."/>
            <person name="Innis C.A."/>
        </authorList>
    </citation>
    <scope>X-RAY CRYSTALLOGRAPHY (2.80 ANGSTROMS) OF 2-209 OF THE 70S RIBOSOME</scope>
    <scope>SUBUNIT</scope>
</reference>
<comment type="function">
    <text evidence="1">With S4 and S5 plays an important role in translational accuracy.</text>
</comment>
<comment type="function">
    <text evidence="3 4 5 6 7 8 9 10 11 12">Interacts with and stabilizes bases of the 16S rRNA that are involved in tRNA selection in the A site and with the mRNA backbone (PubMed:11007480, PubMed:11014182, PubMed:11014183, PubMed:11163189, PubMed:11228145, PubMed:11283358, PubMed:11296217, PubMed:11340196, PubMed:11511350, PubMed:11866529). Located at the interface of the 30S and 50S subunits, it traverses the body of the 30S subunit contacting proteins on the other side and probably holding the rRNA structure together. The combined cluster of proteins S8, S12 and S17 appears to hold together the shoulder and platform of the 30S subunit (PubMed:11283358).</text>
</comment>
<comment type="subunit">
    <text evidence="3 6 7 8 9 10 11 12 14 15">Part of the 30S ribosomal subunit (PubMed:11007480, PubMed:11014182, PubMed:11014183, PubMed:11163189, PubMed:11228145, PubMed:11283358, PubMed:11296217, PubMed:11340196, PubMed:11511350, PubMed:11866529, PubMed:25775268, PubMed:26792896). Contacts proteins S8 and S17 (PubMed:11866529). Interacts with IF1 in the 30S initiation complex (PubMed:11228145).</text>
</comment>
<comment type="PTM">
    <text evidence="14">The methythiolated Asp-89 contacts a modifed residue of the 16S rRNA close to the decoding center, and might be important for decoding center assembly.</text>
</comment>
<comment type="mass spectrometry"/>
<comment type="similarity">
    <text evidence="17">Belongs to the universal ribosomal protein uS12 family.</text>
</comment>
<comment type="sequence caution" evidence="17">
    <conflict type="erroneous initiation">
        <sequence resource="EMBL-CDS" id="BAD71520"/>
    </conflict>
    <text>Extended N-terminus.</text>
</comment>
<comment type="sequence caution" evidence="17">
    <conflict type="erroneous initiation">
        <sequence resource="EMBL-CDS" id="CAA36418"/>
    </conflict>
    <text>Extended N-terminus.</text>
</comment>
<evidence type="ECO:0000250" key="1"/>
<evidence type="ECO:0000256" key="2">
    <source>
        <dbReference type="SAM" id="MobiDB-lite"/>
    </source>
</evidence>
<evidence type="ECO:0000269" key="3">
    <source>
    </source>
</evidence>
<evidence type="ECO:0000269" key="4">
    <source>
    </source>
</evidence>
<evidence type="ECO:0000269" key="5">
    <source>
    </source>
</evidence>
<evidence type="ECO:0000269" key="6">
    <source>
    </source>
</evidence>
<evidence type="ECO:0000269" key="7">
    <source>
    </source>
</evidence>
<evidence type="ECO:0000269" key="8">
    <source>
    </source>
</evidence>
<evidence type="ECO:0000269" key="9">
    <source>
    </source>
</evidence>
<evidence type="ECO:0000269" key="10">
    <source>
    </source>
</evidence>
<evidence type="ECO:0000269" key="11">
    <source>
    </source>
</evidence>
<evidence type="ECO:0000269" key="12">
    <source>
    </source>
</evidence>
<evidence type="ECO:0000269" key="13">
    <source>
    </source>
</evidence>
<evidence type="ECO:0000269" key="14">
    <source>
    </source>
</evidence>
<evidence type="ECO:0000269" key="15">
    <source>
    </source>
</evidence>
<evidence type="ECO:0000269" key="16">
    <source>
    </source>
</evidence>
<evidence type="ECO:0000305" key="17"/>
<evidence type="ECO:0007829" key="18">
    <source>
        <dbReference type="PDB" id="1FJG"/>
    </source>
</evidence>
<evidence type="ECO:0007829" key="19">
    <source>
        <dbReference type="PDB" id="1I94"/>
    </source>
</evidence>
<evidence type="ECO:0007829" key="20">
    <source>
        <dbReference type="PDB" id="2UXB"/>
    </source>
</evidence>
<evidence type="ECO:0007829" key="21">
    <source>
        <dbReference type="PDB" id="2VQE"/>
    </source>
</evidence>
<evidence type="ECO:0007829" key="22">
    <source>
        <dbReference type="PDB" id="2VQF"/>
    </source>
</evidence>
<evidence type="ECO:0007829" key="23">
    <source>
        <dbReference type="PDB" id="4JYA"/>
    </source>
</evidence>
<evidence type="ECO:0007829" key="24">
    <source>
        <dbReference type="PDB" id="7V2L"/>
    </source>
</evidence>